<reference key="1">
    <citation type="journal article" date="1996" name="Hum. Mol. Genet.">
        <title>ATRX encodes a novel member of the SNF2 family of proteins: mutations point to a common mechanism underlying the ATR-X syndrome.</title>
        <authorList>
            <person name="Picketts D.J."/>
            <person name="Higgs D.R."/>
            <person name="Bachoo S."/>
            <person name="Blake D.J."/>
            <person name="Quarrell O.W.J."/>
            <person name="Gibbons R.J."/>
        </authorList>
    </citation>
    <scope>NUCLEOTIDE SEQUENCE [MRNA] (ISOFORMS 1; 2; 3; 4 AND 5)</scope>
    <scope>VARIANT SER-1860</scope>
    <scope>VARIANTS ATRX GLY-1538; ARG-1609; ARG-1614; ASN-1650; VAL-2035; HIS-2084; GLN-2131 AND CYS-2163</scope>
</reference>
<reference key="2">
    <citation type="journal article" date="1997" name="Genomics">
        <title>Determination of the genomic structure of the XNP/ATRX gene encoding a potential zinc finger helicase.</title>
        <authorList>
            <person name="Villard L."/>
            <person name="Lossi A.-M."/>
            <person name="Cardoso C."/>
            <person name="Proud V."/>
            <person name="Chiaroni P."/>
            <person name="Colleaux L."/>
            <person name="Schwartz C."/>
            <person name="Fontes M."/>
        </authorList>
    </citation>
    <scope>NUCLEOTIDE SEQUENCE [MRNA] (ISOFORMS 2 AND 4)</scope>
    <scope>VARIANTS PRO-596 AND GLY-740</scope>
</reference>
<reference key="3">
    <citation type="journal article" date="2003" name="Mol. Biol. Evol.">
        <title>Gene diversity patterns at 10 X-chromosomal loci in humans and chimpanzees.</title>
        <authorList>
            <person name="Kitano T."/>
            <person name="Schwarz C."/>
            <person name="Nickel B."/>
            <person name="Paeaebo S."/>
        </authorList>
    </citation>
    <scope>NUCLEOTIDE SEQUENCE [MRNA]</scope>
    <scope>NUCLEOTIDE SEQUENCE [GENOMIC DNA] OF 163-198</scope>
</reference>
<reference key="4">
    <citation type="submission" date="2005-03" db="EMBL/GenBank/DDBJ databases">
        <authorList>
            <person name="Totoki Y."/>
            <person name="Toyoda A."/>
            <person name="Takeda T."/>
            <person name="Sakaki Y."/>
            <person name="Tanaka A."/>
            <person name="Yokoyama S."/>
            <person name="Ohara O."/>
            <person name="Nagase T."/>
            <person name="Kikuno R.F."/>
        </authorList>
    </citation>
    <scope>NUCLEOTIDE SEQUENCE [LARGE SCALE MRNA] (ISOFORM 6)</scope>
    <scope>NUCLEOTIDE SEQUENCE [LARGE SCALE MRNA] OF 704-1927 (ISOFORMS 1/2/3/4/5)</scope>
    <source>
        <tissue>Brain</tissue>
    </source>
</reference>
<reference key="5">
    <citation type="journal article" date="2005" name="Nature">
        <title>The DNA sequence of the human X chromosome.</title>
        <authorList>
            <person name="Ross M.T."/>
            <person name="Grafham D.V."/>
            <person name="Coffey A.J."/>
            <person name="Scherer S."/>
            <person name="McLay K."/>
            <person name="Muzny D."/>
            <person name="Platzer M."/>
            <person name="Howell G.R."/>
            <person name="Burrows C."/>
            <person name="Bird C.P."/>
            <person name="Frankish A."/>
            <person name="Lovell F.L."/>
            <person name="Howe K.L."/>
            <person name="Ashurst J.L."/>
            <person name="Fulton R.S."/>
            <person name="Sudbrak R."/>
            <person name="Wen G."/>
            <person name="Jones M.C."/>
            <person name="Hurles M.E."/>
            <person name="Andrews T.D."/>
            <person name="Scott C.E."/>
            <person name="Searle S."/>
            <person name="Ramser J."/>
            <person name="Whittaker A."/>
            <person name="Deadman R."/>
            <person name="Carter N.P."/>
            <person name="Hunt S.E."/>
            <person name="Chen R."/>
            <person name="Cree A."/>
            <person name="Gunaratne P."/>
            <person name="Havlak P."/>
            <person name="Hodgson A."/>
            <person name="Metzker M.L."/>
            <person name="Richards S."/>
            <person name="Scott G."/>
            <person name="Steffen D."/>
            <person name="Sodergren E."/>
            <person name="Wheeler D.A."/>
            <person name="Worley K.C."/>
            <person name="Ainscough R."/>
            <person name="Ambrose K.D."/>
            <person name="Ansari-Lari M.A."/>
            <person name="Aradhya S."/>
            <person name="Ashwell R.I."/>
            <person name="Babbage A.K."/>
            <person name="Bagguley C.L."/>
            <person name="Ballabio A."/>
            <person name="Banerjee R."/>
            <person name="Barker G.E."/>
            <person name="Barlow K.F."/>
            <person name="Barrett I.P."/>
            <person name="Bates K.N."/>
            <person name="Beare D.M."/>
            <person name="Beasley H."/>
            <person name="Beasley O."/>
            <person name="Beck A."/>
            <person name="Bethel G."/>
            <person name="Blechschmidt K."/>
            <person name="Brady N."/>
            <person name="Bray-Allen S."/>
            <person name="Bridgeman A.M."/>
            <person name="Brown A.J."/>
            <person name="Brown M.J."/>
            <person name="Bonnin D."/>
            <person name="Bruford E.A."/>
            <person name="Buhay C."/>
            <person name="Burch P."/>
            <person name="Burford D."/>
            <person name="Burgess J."/>
            <person name="Burrill W."/>
            <person name="Burton J."/>
            <person name="Bye J.M."/>
            <person name="Carder C."/>
            <person name="Carrel L."/>
            <person name="Chako J."/>
            <person name="Chapman J.C."/>
            <person name="Chavez D."/>
            <person name="Chen E."/>
            <person name="Chen G."/>
            <person name="Chen Y."/>
            <person name="Chen Z."/>
            <person name="Chinault C."/>
            <person name="Ciccodicola A."/>
            <person name="Clark S.Y."/>
            <person name="Clarke G."/>
            <person name="Clee C.M."/>
            <person name="Clegg S."/>
            <person name="Clerc-Blankenburg K."/>
            <person name="Clifford K."/>
            <person name="Cobley V."/>
            <person name="Cole C.G."/>
            <person name="Conquer J.S."/>
            <person name="Corby N."/>
            <person name="Connor R.E."/>
            <person name="David R."/>
            <person name="Davies J."/>
            <person name="Davis C."/>
            <person name="Davis J."/>
            <person name="Delgado O."/>
            <person name="Deshazo D."/>
            <person name="Dhami P."/>
            <person name="Ding Y."/>
            <person name="Dinh H."/>
            <person name="Dodsworth S."/>
            <person name="Draper H."/>
            <person name="Dugan-Rocha S."/>
            <person name="Dunham A."/>
            <person name="Dunn M."/>
            <person name="Durbin K.J."/>
            <person name="Dutta I."/>
            <person name="Eades T."/>
            <person name="Ellwood M."/>
            <person name="Emery-Cohen A."/>
            <person name="Errington H."/>
            <person name="Evans K.L."/>
            <person name="Faulkner L."/>
            <person name="Francis F."/>
            <person name="Frankland J."/>
            <person name="Fraser A.E."/>
            <person name="Galgoczy P."/>
            <person name="Gilbert J."/>
            <person name="Gill R."/>
            <person name="Gloeckner G."/>
            <person name="Gregory S.G."/>
            <person name="Gribble S."/>
            <person name="Griffiths C."/>
            <person name="Grocock R."/>
            <person name="Gu Y."/>
            <person name="Gwilliam R."/>
            <person name="Hamilton C."/>
            <person name="Hart E.A."/>
            <person name="Hawes A."/>
            <person name="Heath P.D."/>
            <person name="Heitmann K."/>
            <person name="Hennig S."/>
            <person name="Hernandez J."/>
            <person name="Hinzmann B."/>
            <person name="Ho S."/>
            <person name="Hoffs M."/>
            <person name="Howden P.J."/>
            <person name="Huckle E.J."/>
            <person name="Hume J."/>
            <person name="Hunt P.J."/>
            <person name="Hunt A.R."/>
            <person name="Isherwood J."/>
            <person name="Jacob L."/>
            <person name="Johnson D."/>
            <person name="Jones S."/>
            <person name="de Jong P.J."/>
            <person name="Joseph S.S."/>
            <person name="Keenan S."/>
            <person name="Kelly S."/>
            <person name="Kershaw J.K."/>
            <person name="Khan Z."/>
            <person name="Kioschis P."/>
            <person name="Klages S."/>
            <person name="Knights A.J."/>
            <person name="Kosiura A."/>
            <person name="Kovar-Smith C."/>
            <person name="Laird G.K."/>
            <person name="Langford C."/>
            <person name="Lawlor S."/>
            <person name="Leversha M."/>
            <person name="Lewis L."/>
            <person name="Liu W."/>
            <person name="Lloyd C."/>
            <person name="Lloyd D.M."/>
            <person name="Loulseged H."/>
            <person name="Loveland J.E."/>
            <person name="Lovell J.D."/>
            <person name="Lozado R."/>
            <person name="Lu J."/>
            <person name="Lyne R."/>
            <person name="Ma J."/>
            <person name="Maheshwari M."/>
            <person name="Matthews L.H."/>
            <person name="McDowall J."/>
            <person name="McLaren S."/>
            <person name="McMurray A."/>
            <person name="Meidl P."/>
            <person name="Meitinger T."/>
            <person name="Milne S."/>
            <person name="Miner G."/>
            <person name="Mistry S.L."/>
            <person name="Morgan M."/>
            <person name="Morris S."/>
            <person name="Mueller I."/>
            <person name="Mullikin J.C."/>
            <person name="Nguyen N."/>
            <person name="Nordsiek G."/>
            <person name="Nyakatura G."/>
            <person name="O'dell C.N."/>
            <person name="Okwuonu G."/>
            <person name="Palmer S."/>
            <person name="Pandian R."/>
            <person name="Parker D."/>
            <person name="Parrish J."/>
            <person name="Pasternak S."/>
            <person name="Patel D."/>
            <person name="Pearce A.V."/>
            <person name="Pearson D.M."/>
            <person name="Pelan S.E."/>
            <person name="Perez L."/>
            <person name="Porter K.M."/>
            <person name="Ramsey Y."/>
            <person name="Reichwald K."/>
            <person name="Rhodes S."/>
            <person name="Ridler K.A."/>
            <person name="Schlessinger D."/>
            <person name="Schueler M.G."/>
            <person name="Sehra H.K."/>
            <person name="Shaw-Smith C."/>
            <person name="Shen H."/>
            <person name="Sheridan E.M."/>
            <person name="Shownkeen R."/>
            <person name="Skuce C.D."/>
            <person name="Smith M.L."/>
            <person name="Sotheran E.C."/>
            <person name="Steingruber H.E."/>
            <person name="Steward C.A."/>
            <person name="Storey R."/>
            <person name="Swann R.M."/>
            <person name="Swarbreck D."/>
            <person name="Tabor P.E."/>
            <person name="Taudien S."/>
            <person name="Taylor T."/>
            <person name="Teague B."/>
            <person name="Thomas K."/>
            <person name="Thorpe A."/>
            <person name="Timms K."/>
            <person name="Tracey A."/>
            <person name="Trevanion S."/>
            <person name="Tromans A.C."/>
            <person name="d'Urso M."/>
            <person name="Verduzco D."/>
            <person name="Villasana D."/>
            <person name="Waldron L."/>
            <person name="Wall M."/>
            <person name="Wang Q."/>
            <person name="Warren J."/>
            <person name="Warry G.L."/>
            <person name="Wei X."/>
            <person name="West A."/>
            <person name="Whitehead S.L."/>
            <person name="Whiteley M.N."/>
            <person name="Wilkinson J.E."/>
            <person name="Willey D.L."/>
            <person name="Williams G."/>
            <person name="Williams L."/>
            <person name="Williamson A."/>
            <person name="Williamson H."/>
            <person name="Wilming L."/>
            <person name="Woodmansey R.L."/>
            <person name="Wray P.W."/>
            <person name="Yen J."/>
            <person name="Zhang J."/>
            <person name="Zhou J."/>
            <person name="Zoghbi H."/>
            <person name="Zorilla S."/>
            <person name="Buck D."/>
            <person name="Reinhardt R."/>
            <person name="Poustka A."/>
            <person name="Rosenthal A."/>
            <person name="Lehrach H."/>
            <person name="Meindl A."/>
            <person name="Minx P.J."/>
            <person name="Hillier L.W."/>
            <person name="Willard H.F."/>
            <person name="Wilson R.K."/>
            <person name="Waterston R.H."/>
            <person name="Rice C.M."/>
            <person name="Vaudin M."/>
            <person name="Coulson A."/>
            <person name="Nelson D.L."/>
            <person name="Weinstock G."/>
            <person name="Sulston J.E."/>
            <person name="Durbin R.M."/>
            <person name="Hubbard T."/>
            <person name="Gibbs R.A."/>
            <person name="Beck S."/>
            <person name="Rogers J."/>
            <person name="Bentley D.R."/>
        </authorList>
    </citation>
    <scope>NUCLEOTIDE SEQUENCE [LARGE SCALE GENOMIC DNA]</scope>
</reference>
<reference key="6">
    <citation type="submission" date="2005-09" db="EMBL/GenBank/DDBJ databases">
        <authorList>
            <person name="Mural R.J."/>
            <person name="Istrail S."/>
            <person name="Sutton G.G."/>
            <person name="Florea L."/>
            <person name="Halpern A.L."/>
            <person name="Mobarry C.M."/>
            <person name="Lippert R."/>
            <person name="Walenz B."/>
            <person name="Shatkay H."/>
            <person name="Dew I."/>
            <person name="Miller J.R."/>
            <person name="Flanigan M.J."/>
            <person name="Edwards N.J."/>
            <person name="Bolanos R."/>
            <person name="Fasulo D."/>
            <person name="Halldorsson B.V."/>
            <person name="Hannenhalli S."/>
            <person name="Turner R."/>
            <person name="Yooseph S."/>
            <person name="Lu F."/>
            <person name="Nusskern D.R."/>
            <person name="Shue B.C."/>
            <person name="Zheng X.H."/>
            <person name="Zhong F."/>
            <person name="Delcher A.L."/>
            <person name="Huson D.H."/>
            <person name="Kravitz S.A."/>
            <person name="Mouchard L."/>
            <person name="Reinert K."/>
            <person name="Remington K.A."/>
            <person name="Clark A.G."/>
            <person name="Waterman M.S."/>
            <person name="Eichler E.E."/>
            <person name="Adams M.D."/>
            <person name="Hunkapiller M.W."/>
            <person name="Myers E.W."/>
            <person name="Venter J.C."/>
        </authorList>
    </citation>
    <scope>NUCLEOTIDE SEQUENCE [LARGE SCALE GENOMIC DNA]</scope>
</reference>
<reference key="7">
    <citation type="journal article" date="1994" name="Hum. Mol. Genet.">
        <title>Cloning and characterization of a new human Xq13 gene, encoding a putative helicase.</title>
        <authorList>
            <person name="Stayton C.L."/>
            <person name="Dabovic B."/>
            <person name="Gulisano M."/>
            <person name="Gecz J."/>
            <person name="Broccoli V."/>
            <person name="Giovanazzi S."/>
            <person name="Bossolasco M."/>
            <person name="Monaco L."/>
            <person name="Rastan S."/>
            <person name="Boncinelli E."/>
            <person name="Bianchi M.E."/>
            <person name="Consalez G.G."/>
        </authorList>
    </citation>
    <scope>NUCLEOTIDE SEQUENCE [MRNA] OF 860-2492</scope>
</reference>
<reference key="8">
    <citation type="journal article" date="1994" name="Hum. Mol. Genet.">
        <title>Cloning and expression of the murine homologue of a putative human X-linked nuclear protein gene closely linked to PGK1 in Xq13.3.</title>
        <authorList>
            <person name="Gecz J."/>
            <person name="Pollard H."/>
            <person name="Consalez G."/>
            <person name="Villard L."/>
            <person name="Stayton C.L."/>
            <person name="Millasseau P."/>
            <person name="Khrestchatisky M."/>
            <person name="Fontes M."/>
        </authorList>
    </citation>
    <scope>PRELIMINARY PARTIAL NUCLEOTIDE SEQUENCE [GENOMIC DNA]</scope>
</reference>
<reference key="9">
    <citation type="journal article" date="1995" name="Cell">
        <title>Mutations in a putative global transcriptional regulator cause X-linked mental retardation with alpha-thalassemia (ATR-X syndrome).</title>
        <authorList>
            <person name="Gibbons R.J."/>
            <person name="Picketts D.J."/>
            <person name="Villard L."/>
            <person name="Higgs D.R."/>
        </authorList>
    </citation>
    <scope>NUCLEOTIDE SEQUENCE [GENOMIC DNA] OF 2401-2492</scope>
    <scope>VARIANTS ATRX ARG-1609; ARG-1614; ASN-1650; SER-1860; VAL-2035; HIS-2084 AND CYS-2163</scope>
</reference>
<reference key="10">
    <citation type="journal article" date="1998" name="Hum. Mol. Genet.">
        <title>Specific interaction between the XNP/ATR-X gene product and the SET domain of the human EZH2 protein.</title>
        <authorList>
            <person name="Cardoso C."/>
            <person name="Timsit S."/>
            <person name="Villard L."/>
            <person name="Khrestchatisky M."/>
            <person name="Fontes M."/>
            <person name="Colleaux L."/>
        </authorList>
    </citation>
    <scope>INTERACTION WITH EZH2</scope>
</reference>
<reference key="11">
    <citation type="journal article" date="1999" name="Proc. Natl. Acad. Sci. U.S.A.">
        <title>Localization of a putative transcriptional regulator (ATRX) at pericentromeric heterochromatin and the short arms of acrocentric chromosomes.</title>
        <authorList>
            <person name="McDowell T.L."/>
            <person name="Gibbons R.J."/>
            <person name="Sutherland H."/>
            <person name="O'Rourke D.M."/>
            <person name="Bickmore W.A."/>
            <person name="Pombo A."/>
            <person name="Turley H."/>
            <person name="Gatter K."/>
            <person name="Picketts D.J."/>
            <person name="Buckle V.J."/>
            <person name="Chapman L."/>
            <person name="Rhodes D."/>
            <person name="Higgs D.R."/>
        </authorList>
    </citation>
    <scope>SUBCELLULAR LOCATION</scope>
    <scope>ASSOCIATION WITH PERICENTROMERIC HETEROCHROMATIN</scope>
</reference>
<reference key="12">
    <citation type="journal article" date="2000" name="Am. J. Med. Genet.">
        <title>Identification of a mutation in the XNP/ATR-X gene in a family reported as Smith-Fineman-Myers syndrome.</title>
        <authorList>
            <person name="Villard L."/>
            <person name="Fontes M."/>
            <person name="Ades L.C."/>
            <person name="Gecz J."/>
        </authorList>
    </citation>
    <scope>INVOLVEMENT IN MRXHF1</scope>
</reference>
<reference key="13">
    <citation type="journal article" date="2000" name="Hum. Mol. Genet.">
        <title>Cell cycle-dependent phosphorylation of the ATRX protein correlates with changes in nuclear matrix and chromatin association.</title>
        <authorList>
            <person name="Berube N.G."/>
            <person name="Smeenk C.A."/>
            <person name="Picketts D.J."/>
        </authorList>
    </citation>
    <scope>INTERACTION WITH CBX5</scope>
    <scope>PHOSPHORYLATION</scope>
</reference>
<reference key="14">
    <citation type="journal article" date="2003" name="Nat. Genet.">
        <title>Identification of acquired somatic mutations in the gene encoding chromatin-remodeling factor ATRX in the alpha-thalassemia myelodysplasia syndrome (ATMDS).</title>
        <authorList>
            <person name="Gibbons R.J."/>
            <person name="Pellagatti A."/>
            <person name="Garrick D."/>
            <person name="Wood W.G."/>
            <person name="Malik N."/>
            <person name="Ayyub H."/>
            <person name="Langford C."/>
            <person name="Boultwood J."/>
            <person name="Wainscoat J.S."/>
            <person name="Higgs D.R."/>
        </authorList>
    </citation>
    <scope>INVOLVEMENT IN ATMDS</scope>
</reference>
<reference key="15">
    <citation type="journal article" date="2003" name="Proc. Natl. Acad. Sci. U.S.A.">
        <title>The ATRX syndrome protein forms a chromatin-remodeling complex with Daxx and localizes in promyelocytic leukemia nuclear bodies.</title>
        <authorList>
            <person name="Xue Y."/>
            <person name="Gibbons R."/>
            <person name="Yan Z."/>
            <person name="Yang D."/>
            <person name="McDowell T.L."/>
            <person name="Sechi S."/>
            <person name="Qin J."/>
            <person name="Zhou S."/>
            <person name="Higgs D."/>
            <person name="Wang W."/>
        </authorList>
    </citation>
    <scope>FUNCTION</scope>
    <scope>INTERACTION WITH DAXX</scope>
    <scope>SUBCELLULAR LOCATION</scope>
</reference>
<reference key="16">
    <citation type="journal article" date="2004" name="J. Biol. Chem.">
        <title>A novel transcription regulatory complex containing death domain-associated protein and the ATR-X syndrome protein.</title>
        <authorList>
            <person name="Tang J."/>
            <person name="Wu S."/>
            <person name="Liu H."/>
            <person name="Stratt R."/>
            <person name="Barak O.G."/>
            <person name="Shiekhattar R."/>
            <person name="Picketts D.J."/>
            <person name="Yang X."/>
        </authorList>
    </citation>
    <scope>FUNCTION</scope>
    <scope>INTERACTION WITH DAXX</scope>
    <scope>SUBCELLULAR LOCATION</scope>
    <scope>MUTAGENESIS OF LYS-1600</scope>
    <scope>CHARACTERIZATION OF VARIANTS ATRX VAL-2035 AND HIS-2084</scope>
</reference>
<reference key="17">
    <citation type="journal article" date="2005" name="Biochem. Biophys. Res. Commun.">
        <title>The mammalian heterochromatin protein 1 binds diverse nuclear proteins through a common motif that targets the chromoshadow domain.</title>
        <authorList>
            <person name="Lechner M.S."/>
            <person name="Schultz D.C."/>
            <person name="Negorev D."/>
            <person name="Maul G.G."/>
            <person name="Rauscher F.J. III"/>
        </authorList>
    </citation>
    <scope>INTERACTION WITH CBX5</scope>
</reference>
<reference key="18">
    <citation type="journal article" date="2006" name="Cell">
        <title>Global, in vivo, and site-specific phosphorylation dynamics in signaling networks.</title>
        <authorList>
            <person name="Olsen J.V."/>
            <person name="Blagoev B."/>
            <person name="Gnad F."/>
            <person name="Macek B."/>
            <person name="Kumar C."/>
            <person name="Mortensen P."/>
            <person name="Mann M."/>
        </authorList>
    </citation>
    <scope>PHOSPHORYLATION [LARGE SCALE ANALYSIS] AT SER-634 AND SER-1352</scope>
    <scope>IDENTIFICATION BY MASS SPECTROMETRY [LARGE SCALE ANALYSIS]</scope>
    <source>
        <tissue>Cervix carcinoma</tissue>
    </source>
</reference>
<reference key="19">
    <citation type="journal article" date="2007" name="Proc. Natl. Acad. Sci. U.S.A.">
        <title>Interaction between chromatin proteins MECP2 and ATRX is disrupted by mutations that cause inherited mental retardation.</title>
        <authorList>
            <person name="Nan X."/>
            <person name="Hou J."/>
            <person name="Maclean A."/>
            <person name="Nasir J."/>
            <person name="Lafuente M.J."/>
            <person name="Shu X."/>
            <person name="Kriaucionis S."/>
            <person name="Bird A."/>
        </authorList>
    </citation>
    <scope>INTERACTION WITH MECP2</scope>
</reference>
<reference key="20">
    <citation type="journal article" date="2007" name="Science">
        <title>ATM and ATR substrate analysis reveals extensive protein networks responsive to DNA damage.</title>
        <authorList>
            <person name="Matsuoka S."/>
            <person name="Ballif B.A."/>
            <person name="Smogorzewska A."/>
            <person name="McDonald E.R. III"/>
            <person name="Hurov K.E."/>
            <person name="Luo J."/>
            <person name="Bakalarski C.E."/>
            <person name="Zhao Z."/>
            <person name="Solimini N."/>
            <person name="Lerenthal Y."/>
            <person name="Shiloh Y."/>
            <person name="Gygi S.P."/>
            <person name="Elledge S.J."/>
        </authorList>
    </citation>
    <scope>IDENTIFICATION BY MASS SPECTROMETRY [LARGE SCALE ANALYSIS]</scope>
    <source>
        <tissue>Embryonic kidney</tissue>
    </source>
</reference>
<reference key="21">
    <citation type="journal article" date="2008" name="Proc. Natl. Acad. Sci. U.S.A.">
        <title>A quantitative atlas of mitotic phosphorylation.</title>
        <authorList>
            <person name="Dephoure N."/>
            <person name="Zhou C."/>
            <person name="Villen J."/>
            <person name="Beausoleil S.A."/>
            <person name="Bakalarski C.E."/>
            <person name="Elledge S.J."/>
            <person name="Gygi S.P."/>
        </authorList>
    </citation>
    <scope>PHOSPHORYLATION [LARGE SCALE ANALYSIS] AT SER-594; THR-674; SER-675; SER-677; SER-729; SER-731; SER-875; SER-876; SER-1348; SER-1352; SER-1996 AND SER-2220</scope>
    <scope>IDENTIFICATION BY MASS SPECTROMETRY [LARGE SCALE ANALYSIS]</scope>
    <source>
        <tissue>Cervix carcinoma</tissue>
    </source>
</reference>
<reference key="22">
    <citation type="journal article" date="2009" name="Anal. Chem.">
        <title>Lys-N and trypsin cover complementary parts of the phosphoproteome in a refined SCX-based approach.</title>
        <authorList>
            <person name="Gauci S."/>
            <person name="Helbig A.O."/>
            <person name="Slijper M."/>
            <person name="Krijgsveld J."/>
            <person name="Heck A.J."/>
            <person name="Mohammed S."/>
        </authorList>
    </citation>
    <scope>IDENTIFICATION BY MASS SPECTROMETRY [LARGE SCALE ANALYSIS]</scope>
</reference>
<reference key="23">
    <citation type="journal article" date="2009" name="Sci. Signal.">
        <title>Quantitative phosphoproteomic analysis of T cell receptor signaling reveals system-wide modulation of protein-protein interactions.</title>
        <authorList>
            <person name="Mayya V."/>
            <person name="Lundgren D.H."/>
            <person name="Hwang S.-I."/>
            <person name="Rezaul K."/>
            <person name="Wu L."/>
            <person name="Eng J.K."/>
            <person name="Rodionov V."/>
            <person name="Han D.K."/>
        </authorList>
    </citation>
    <scope>PHOSPHORYLATION [LARGE SCALE ANALYSIS] AT SER-34; TYR-89; SER-112 AND SER-1996</scope>
    <scope>IDENTIFICATION BY MASS SPECTROMETRY [LARGE SCALE ANALYSIS]</scope>
    <source>
        <tissue>Leukemic T-cell</tissue>
    </source>
</reference>
<reference key="24">
    <citation type="journal article" date="2009" name="Science">
        <title>Lysine acetylation targets protein complexes and co-regulates major cellular functions.</title>
        <authorList>
            <person name="Choudhary C."/>
            <person name="Kumar C."/>
            <person name="Gnad F."/>
            <person name="Nielsen M.L."/>
            <person name="Rehman M."/>
            <person name="Walther T.C."/>
            <person name="Olsen J.V."/>
            <person name="Mann M."/>
        </authorList>
    </citation>
    <scope>ACETYLATION [LARGE SCALE ANALYSIS] AT LYS-967</scope>
    <scope>IDENTIFICATION BY MASS SPECTROMETRY [LARGE SCALE ANALYSIS]</scope>
</reference>
<reference key="25">
    <citation type="journal article" date="2010" name="Cell">
        <title>ATR-X syndrome protein targets tandem repeats and influences allele-specific expression in a size-dependent manner.</title>
        <authorList>
            <person name="Law M.J."/>
            <person name="Lower K.M."/>
            <person name="Voon H.P."/>
            <person name="Hughes J.R."/>
            <person name="Garrick D."/>
            <person name="Viprakasit V."/>
            <person name="Mitson M."/>
            <person name="De Gobbi M."/>
            <person name="Marra M."/>
            <person name="Morris A."/>
            <person name="Abbott A."/>
            <person name="Wilder S.P."/>
            <person name="Taylor S."/>
            <person name="Santos G.M."/>
            <person name="Cross J."/>
            <person name="Ayyub H."/>
            <person name="Jones S."/>
            <person name="Ragoussis J."/>
            <person name="Rhodes D."/>
            <person name="Dunham I."/>
            <person name="Higgs D.R."/>
            <person name="Gibbons R.J."/>
        </authorList>
    </citation>
    <scope>FUNCTION</scope>
    <scope>SUBCELLULAR LOCATION</scope>
</reference>
<reference key="26">
    <citation type="journal article" date="2010" name="Cell">
        <title>Distinct factors control histone variant H3.3 localization at specific genomic regions.</title>
        <authorList>
            <person name="Goldberg A.D."/>
            <person name="Banaszynski L.A."/>
            <person name="Noh K.M."/>
            <person name="Lewis P.W."/>
            <person name="Elsaesser S.J."/>
            <person name="Stadler S."/>
            <person name="Dewell S."/>
            <person name="Law M."/>
            <person name="Guo X."/>
            <person name="Li X."/>
            <person name="Wen D."/>
            <person name="Chapgier A."/>
            <person name="DeKelver R.C."/>
            <person name="Miller J.C."/>
            <person name="Lee Y.L."/>
            <person name="Boydston E.A."/>
            <person name="Holmes M.C."/>
            <person name="Gregory P.D."/>
            <person name="Greally J.M."/>
            <person name="Rafii S."/>
            <person name="Yang C."/>
            <person name="Scambler P.J."/>
            <person name="Garrick D."/>
            <person name="Gibbons R.J."/>
            <person name="Higgs D.R."/>
            <person name="Cristea I.M."/>
            <person name="Urnov F.D."/>
            <person name="Zheng D."/>
            <person name="Allis C.D."/>
        </authorList>
    </citation>
    <scope>ASSOCIATION WITH HISTONE H3.3</scope>
</reference>
<reference key="27">
    <citation type="journal article" date="2010" name="Genes Dev.">
        <title>The death-associated protein DAXX is a novel histone chaperone involved in the replication-independent deposition of H3.3.</title>
        <authorList>
            <person name="Drane P."/>
            <person name="Ouararhni K."/>
            <person name="Depaux A."/>
            <person name="Shuaib M."/>
            <person name="Hamiche A."/>
        </authorList>
    </citation>
    <scope>FUNCTION</scope>
</reference>
<reference key="28">
    <citation type="journal article" date="2010" name="Proc. Natl. Acad. Sci. U.S.A.">
        <title>Daxx is an H3.3-specific histone chaperone and cooperates with ATRX in replication-independent chromatin assembly at telomeres.</title>
        <authorList>
            <person name="Lewis P.W."/>
            <person name="Elsaesser S.J."/>
            <person name="Noh K.M."/>
            <person name="Stadler S.C."/>
            <person name="Allis C.D."/>
        </authorList>
    </citation>
    <scope>FUNCTION OF THE ATRX:DAXX COMPLEX</scope>
</reference>
<reference key="29">
    <citation type="journal article" date="2010" name="Sci. Signal.">
        <title>Quantitative phosphoproteomics reveals widespread full phosphorylation site occupancy during mitosis.</title>
        <authorList>
            <person name="Olsen J.V."/>
            <person name="Vermeulen M."/>
            <person name="Santamaria A."/>
            <person name="Kumar C."/>
            <person name="Miller M.L."/>
            <person name="Jensen L.J."/>
            <person name="Gnad F."/>
            <person name="Cox J."/>
            <person name="Jensen T.S."/>
            <person name="Nigg E.A."/>
            <person name="Brunak S."/>
            <person name="Mann M."/>
        </authorList>
    </citation>
    <scope>PHOSPHORYLATION [LARGE SCALE ANALYSIS] AT SER-92; THR-591; SER-598; SER-1061; TYR-1063; SER-1348; SER-1352; SER-1527; SER-1992; SER-1996 AND SER-2220</scope>
    <scope>IDENTIFICATION BY MASS SPECTROMETRY [LARGE SCALE ANALYSIS]</scope>
    <source>
        <tissue>Cervix carcinoma</tissue>
    </source>
</reference>
<reference key="30">
    <citation type="journal article" date="2011" name="BMC Syst. Biol.">
        <title>Initial characterization of the human central proteome.</title>
        <authorList>
            <person name="Burkard T.R."/>
            <person name="Planyavsky M."/>
            <person name="Kaupe I."/>
            <person name="Breitwieser F.P."/>
            <person name="Buerckstuemmer T."/>
            <person name="Bennett K.L."/>
            <person name="Superti-Furga G."/>
            <person name="Colinge J."/>
        </authorList>
    </citation>
    <scope>IDENTIFICATION BY MASS SPECTROMETRY [LARGE SCALE ANALYSIS]</scope>
</reference>
<reference key="31">
    <citation type="journal article" date="2011" name="Hum. Mol. Genet.">
        <title>The ATRX-ADD domain binds to H3 tail peptides and reads the combined methylation state of K4 and K9.</title>
        <authorList>
            <person name="Dhayalan A."/>
            <person name="Tamas R."/>
            <person name="Bock I."/>
            <person name="Tattermusch A."/>
            <person name="Dimitrova E."/>
            <person name="Kudithipudi S."/>
            <person name="Ragozin S."/>
            <person name="Jeltsch A."/>
        </authorList>
    </citation>
    <scope>INTERACTION WITH TRIMETHYLATED HISTONE H3 'LYS-9'</scope>
    <scope>CHARACTERIZATION OF VARIANTS ATRX CYS-246; LEU-246 AND ASP-249</scope>
    <scope>MUTAGENESIS OF TYR-203; TYR-204; ILE-209; ASP-214 AND ASP-217</scope>
</reference>
<reference key="32">
    <citation type="journal article" date="2011" name="Sci. Signal.">
        <title>System-wide temporal characterization of the proteome and phosphoproteome of human embryonic stem cell differentiation.</title>
        <authorList>
            <person name="Rigbolt K.T."/>
            <person name="Prokhorova T.A."/>
            <person name="Akimov V."/>
            <person name="Henningsen J."/>
            <person name="Johansen P.T."/>
            <person name="Kratchmarova I."/>
            <person name="Kassem M."/>
            <person name="Mann M."/>
            <person name="Olsen J.V."/>
            <person name="Blagoev B."/>
        </authorList>
    </citation>
    <scope>PHOSPHORYLATION [LARGE SCALE ANALYSIS] AT SER-598; SER-889; SER-1061; SER-1322; SER-1324; SER-1326; SER-1348 AND SER-1352</scope>
    <scope>IDENTIFICATION BY MASS SPECTROMETRY [LARGE SCALE ANALYSIS]</scope>
</reference>
<reference key="33">
    <citation type="journal article" date="2012" name="Genes Dev.">
        <title>ATRX-mediated chromatin association of histone variant macroH2A1 regulates alpha-globin expression.</title>
        <authorList>
            <person name="Ratnakumar K."/>
            <person name="Duarte L.F."/>
            <person name="LeRoy G."/>
            <person name="Hasson D."/>
            <person name="Smeets D."/>
            <person name="Vardabasso C."/>
            <person name="Bonisch C."/>
            <person name="Zeng T."/>
            <person name="Xiang B."/>
            <person name="Zhang D.Y."/>
            <person name="Li H."/>
            <person name="Wang X."/>
            <person name="Hake S.B."/>
            <person name="Schermelleh L."/>
            <person name="Garcia B.A."/>
            <person name="Bernstein E."/>
        </authorList>
    </citation>
    <scope>FUNCTION</scope>
    <scope>INTERACTION WITH HISTONE MACROH2A1</scope>
</reference>
<reference key="34">
    <citation type="journal article" date="2012" name="PLoS Genet.">
        <title>Loss of ATRX, genome instability, and an altered DNA damage response are hallmarks of the alternative lengthening of telomeres pathway.</title>
        <authorList>
            <person name="Lovejoy C.A."/>
            <person name="Li W."/>
            <person name="Reisenweber S."/>
            <person name="Thongthip S."/>
            <person name="Bruno J."/>
            <person name="de Lange T."/>
            <person name="De S."/>
            <person name="Petrini J.H."/>
            <person name="Sung P.A."/>
            <person name="Jasin M."/>
            <person name="Rosenbluh J."/>
            <person name="Zwang Y."/>
            <person name="Weir B.A."/>
            <person name="Hatton C."/>
            <person name="Ivanova E."/>
            <person name="Macconaill L."/>
            <person name="Hanna M."/>
            <person name="Hahn W.C."/>
            <person name="Lue N.F."/>
            <person name="Reddel R.R."/>
            <person name="Jiao Y."/>
            <person name="Kinzler K."/>
            <person name="Vogelstein B."/>
            <person name="Papadopoulos N."/>
            <person name="Meeker A.K."/>
        </authorList>
    </citation>
    <scope>FUNCTION</scope>
</reference>
<reference key="35">
    <citation type="journal article" date="2013" name="Genome Res.">
        <title>DAXX-dependent supply of soluble (H3.3-H4) dimers to PML bodies pending deposition into chromatin.</title>
        <authorList>
            <person name="Delbarre E."/>
            <person name="Ivanauskiene K."/>
            <person name="Kuntziger T."/>
            <person name="Collas P."/>
        </authorList>
    </citation>
    <scope>SUBCELLULAR LOCATION</scope>
</reference>
<reference key="36">
    <citation type="journal article" date="2013" name="J. Proteome Res.">
        <title>Toward a comprehensive characterization of a human cancer cell phosphoproteome.</title>
        <authorList>
            <person name="Zhou H."/>
            <person name="Di Palma S."/>
            <person name="Preisinger C."/>
            <person name="Peng M."/>
            <person name="Polat A.N."/>
            <person name="Heck A.J."/>
            <person name="Mohammed S."/>
        </authorList>
    </citation>
    <scope>PHOSPHORYLATION [LARGE SCALE ANALYSIS] AT SER-25; SER-34; SER-316; SER-677; SER-729; SER-731; SER-819; SER-849; SER-850; SER-889; SER-962; SER-1061; SER-1348; SER-1352; SER-1527 AND THR-1529</scope>
    <scope>IDENTIFICATION BY MASS SPECTROMETRY [LARGE SCALE ANALYSIS]</scope>
    <source>
        <tissue>Cervix carcinoma</tissue>
        <tissue>Erythroleukemia</tissue>
    </source>
</reference>
<reference key="37">
    <citation type="journal article" date="2014" name="J. Proteomics">
        <title>An enzyme assisted RP-RPLC approach for in-depth analysis of human liver phosphoproteome.</title>
        <authorList>
            <person name="Bian Y."/>
            <person name="Song C."/>
            <person name="Cheng K."/>
            <person name="Dong M."/>
            <person name="Wang F."/>
            <person name="Huang J."/>
            <person name="Sun D."/>
            <person name="Wang L."/>
            <person name="Ye M."/>
            <person name="Zou H."/>
        </authorList>
    </citation>
    <scope>PHOSPHORYLATION [LARGE SCALE ANALYSIS] AT SER-92; SER-598; SER-675; SER-974 AND THR-977</scope>
    <scope>IDENTIFICATION BY MASS SPECTROMETRY [LARGE SCALE ANALYSIS]</scope>
    <source>
        <tissue>Liver</tissue>
    </source>
</reference>
<reference key="38">
    <citation type="journal article" date="2014" name="Nat. Struct. Mol. Biol.">
        <title>Uncovering global SUMOylation signaling networks in a site-specific manner.</title>
        <authorList>
            <person name="Hendriks I.A."/>
            <person name="D'Souza R.C."/>
            <person name="Yang B."/>
            <person name="Verlaan-de Vries M."/>
            <person name="Mann M."/>
            <person name="Vertegaal A.C."/>
        </authorList>
    </citation>
    <scope>SUMOYLATION [LARGE SCALE ANALYSIS] AT LYS-299; LYS-438; LYS-1004; LYS-1488 AND LYS-1982</scope>
    <scope>IDENTIFICATION BY MASS SPECTROMETRY [LARGE SCALE ANALYSIS]</scope>
</reference>
<reference key="39">
    <citation type="journal article" date="2014" name="Nucleic Acids Res.">
        <title>Alternative lengthening of telomeres is characterized by reduced compaction of telomeric chromatin.</title>
        <authorList>
            <person name="Episkopou H."/>
            <person name="Draskovic I."/>
            <person name="Van Beneden A."/>
            <person name="Tilman G."/>
            <person name="Mattiussi M."/>
            <person name="Gobin M."/>
            <person name="Arnoult N."/>
            <person name="Londono-Vallejo A."/>
            <person name="Decottignies A."/>
        </authorList>
    </citation>
    <scope>FUNCTION</scope>
</reference>
<reference key="40">
    <citation type="journal article" date="2014" name="PLoS ONE">
        <title>ATRX dysfunction induces replication defects in primary mouse cells.</title>
        <authorList>
            <person name="Clynes D."/>
            <person name="Jelinska C."/>
            <person name="Xella B."/>
            <person name="Ayyub H."/>
            <person name="Taylor S."/>
            <person name="Mitson M."/>
            <person name="Bachrati C.Z."/>
            <person name="Higgs D.R."/>
            <person name="Gibbons R.J."/>
        </authorList>
    </citation>
    <scope>INTERACTION WITH RAD50; MRE11 AND NBN</scope>
</reference>
<reference key="41">
    <citation type="journal article" date="2014" name="Proc. Natl. Acad. Sci. U.S.A.">
        <title>Mapping of SUMO sites and analysis of SUMOylation changes induced by external stimuli.</title>
        <authorList>
            <person name="Impens F."/>
            <person name="Radoshevich L."/>
            <person name="Cossart P."/>
            <person name="Ribet D."/>
        </authorList>
    </citation>
    <scope>SUMOYLATION [LARGE SCALE ANALYSIS] AT LYS-623 AND LYS-1982</scope>
    <scope>IDENTIFICATION BY MASS SPECTROMETRY [LARGE SCALE ANALYSIS]</scope>
</reference>
<reference key="42">
    <citation type="journal article" date="2015" name="Cell Rep.">
        <title>SUMO-2 orchestrates chromatin modifiers in response to DNA damage.</title>
        <authorList>
            <person name="Hendriks I.A."/>
            <person name="Treffers L.W."/>
            <person name="Verlaan-de Vries M."/>
            <person name="Olsen J.V."/>
            <person name="Vertegaal A.C."/>
        </authorList>
    </citation>
    <scope>SUMOYLATION [LARGE SCALE ANALYSIS] AT LYS-1004 AND LYS-1982</scope>
    <scope>IDENTIFICATION BY MASS SPECTROMETRY [LARGE SCALE ANALYSIS]</scope>
</reference>
<reference key="43">
    <citation type="journal article" date="2016" name="Epigenetics">
        <title>ATRX binds to atypical chromatin domains at the 3' exons of zinc finger genes to preserve H3K9me3 enrichment.</title>
        <authorList>
            <person name="Valle-Garcia D."/>
            <person name="Qadeer Z.A."/>
            <person name="McHugh D.S."/>
            <person name="Ghiraldini F.G."/>
            <person name="Chowdhury A.H."/>
            <person name="Hasson D."/>
            <person name="Dyer M.A."/>
            <person name="Recillas-Targa F."/>
            <person name="Bernstein E."/>
        </authorList>
    </citation>
    <scope>FUNCTION</scope>
    <scope>INTERACTION WITH DAXX; SETDB1; TRIM28 AND ZNF274</scope>
</reference>
<reference key="44">
    <citation type="journal article" date="2017" name="Nat. Struct. Mol. Biol.">
        <title>Site-specific mapping of the human SUMO proteome reveals co-modification with phosphorylation.</title>
        <authorList>
            <person name="Hendriks I.A."/>
            <person name="Lyon D."/>
            <person name="Young C."/>
            <person name="Jensen L.J."/>
            <person name="Vertegaal A.C."/>
            <person name="Nielsen M.L."/>
        </authorList>
    </citation>
    <scope>SUMOYLATION [LARGE SCALE ANALYSIS] AT LYS-10; LYS-138; LYS-142; LYS-438; LYS-623; LYS-1004; LYS-1488; LYS-1982 AND LYS-1987</scope>
    <scope>IDENTIFICATION BY MASS SPECTROMETRY [LARGE SCALE ANALYSIS]</scope>
</reference>
<reference key="45">
    <citation type="journal article" date="2007" name="Proc. Natl. Acad. Sci. U.S.A.">
        <title>Structural consequences of disease-causing mutations in the ATRX-DNMT3-DNMT3L (ADD) domain of the chromatin-associated protein ATRX.</title>
        <authorList>
            <person name="Argentaro A."/>
            <person name="Yang J.C."/>
            <person name="Chapman L."/>
            <person name="Kowalczyk M.S."/>
            <person name="Gibbons R.J."/>
            <person name="Higgs D.R."/>
            <person name="Neuhaus D."/>
            <person name="Rhodes D."/>
        </authorList>
    </citation>
    <scope>STRUCTURE BY NMR OF 159-296</scope>
    <scope>DOMAIN GATA-TYPE ZINC-FINGER</scope>
</reference>
<reference key="46">
    <citation type="journal article" date="2011" name="Nat. Struct. Mol. Biol.">
        <title>ATRX ADD domain links an atypical histone methylation recognition mechanism to human mental-retardation syndrome.</title>
        <authorList>
            <person name="Iwase S."/>
            <person name="Xiang B."/>
            <person name="Ghosh S."/>
            <person name="Ren T."/>
            <person name="Lewis P.W."/>
            <person name="Cochrane J.C."/>
            <person name="Allis C.D."/>
            <person name="Picketts D.J."/>
            <person name="Patel D.J."/>
            <person name="Li H."/>
            <person name="Shi Y."/>
        </authorList>
    </citation>
    <scope>X-RAY CRYSTALLOGRAPHY (0.93 ANGSTROMS) OF 167-289 IN COMPLEX WITH HISTONE H3K9ME3 PEPTIDE</scope>
    <scope>SUBCELLULAR LOCATION</scope>
    <scope>CHARACTERIZATION OF ATRX VARIANTS ALA-190; PRO-219 AND CYS-246</scope>
    <scope>MUTAGENESIS OF HIS-189; TYR-203; TYR-204; ASP-217; GLU-252 AND LYS-1600</scope>
</reference>
<reference key="47">
    <citation type="journal article" date="2011" name="Nat. Struct. Mol. Biol.">
        <title>Combinatorial readout of histone H3 modifications specifies localization of ATRX to heterochromatin.</title>
        <authorList>
            <person name="Eustermann S."/>
            <person name="Yang J.C."/>
            <person name="Law M.J."/>
            <person name="Amos R."/>
            <person name="Chapman L.M."/>
            <person name="Jelinska C."/>
            <person name="Garrick D."/>
            <person name="Clynes D."/>
            <person name="Gibbons R.J."/>
            <person name="Rhodes D."/>
            <person name="Higgs D.R."/>
            <person name="Neuhaus D."/>
        </authorList>
    </citation>
    <scope>STRUCTURE BY NMR OF 163-296 IN COMPLEX WITH HISTONE H3K9ME3 PEPTIDE</scope>
    <scope>CHARACTERIZATION OF ATRX VARIANT PRO-219</scope>
    <scope>MUTAGENESIS OF TYR-203 AND GLU-218</scope>
</reference>
<reference key="48">
    <citation type="journal article" date="1996" name="Eur. J. Hum. Genet.">
        <title>A point mutation in the XNP gene, associated with an ATR-X phenotype without alpha-thalassemia.</title>
        <authorList>
            <person name="Villard L."/>
            <person name="Lacombe D."/>
            <person name="Fontes M."/>
        </authorList>
    </citation>
    <scope>VARIANT ATRX SER-1713</scope>
</reference>
<reference key="49">
    <citation type="journal article" date="1996" name="Nat. Genet.">
        <title>XNP mutation in a large family with Juberg-Marsidi syndrome.</title>
        <authorList>
            <person name="Villard L."/>
            <person name="Gecz J."/>
            <person name="Mattei J.-F."/>
            <person name="Fontes M."/>
            <person name="Saugier-Veber P."/>
            <person name="Munnich A."/>
            <person name="Lyonnet S."/>
        </authorList>
    </citation>
    <scope>VARIANT MRXHF1 GLN-2131</scope>
</reference>
<reference key="50">
    <citation type="journal article" date="1997" name="Nat. Genet.">
        <title>Mutations in transcriptional regulator ATRX establish the functional significance of a PHD-like domain.</title>
        <authorList>
            <person name="Gibbons R.J."/>
            <person name="Bachoo S."/>
            <person name="Picketts D.J."/>
            <person name="Aftimos S."/>
            <person name="Asenbauer B."/>
            <person name="Bergoffen J."/>
            <person name="Berry S.A."/>
            <person name="Dahl N."/>
            <person name="Fryer A."/>
            <person name="Keppler K."/>
            <person name="Kurosawa K."/>
            <person name="Levin M.L."/>
            <person name="Masuno M."/>
            <person name="Neri G."/>
            <person name="Pierpont M.E."/>
            <person name="Slaney S.F."/>
            <person name="Higgs D.R."/>
        </authorList>
    </citation>
    <scope>VARIANTS ATRX ALA-190; PHE-192; SER-200; ARG-220; SER-222; PHE-243; CYS-246 AND ASP-249</scope>
</reference>
<reference key="51">
    <citation type="journal article" date="1998" name="Hum. Mutat.">
        <title>New mutations in XNP/ATR-X gene: a further contribution to genotype/phenotype relationship in ATR/X syndrome.</title>
        <authorList>
            <person name="Fichera M."/>
            <person name="Romano C."/>
            <person name="Castiglia L."/>
            <person name="Failla P."/>
            <person name="Ruberto C."/>
            <person name="Amata S."/>
            <person name="Greco D."/>
            <person name="Cardoso C."/>
            <person name="Fontes M."/>
            <person name="Ragusa A."/>
        </authorList>
    </citation>
    <scope>VARIANT ATRX LEU-246</scope>
</reference>
<reference key="52">
    <citation type="journal article" date="1999" name="Am. J. Hum. Genet.">
        <title>Mutation of the XNP/ATR-X gene in a family with severe mental retardation, spastic paraplegia and skewed pattern of X inactivation: demonstration that the mutation is involved in the inactivation bias.</title>
        <authorList>
            <person name="Lossi A.-M."/>
            <person name="Millan J.M."/>
            <person name="Villard L."/>
            <person name="Orellana C."/>
            <person name="Cardoso C."/>
            <person name="Prieto F."/>
            <person name="Fontes M."/>
            <person name="Martinez F."/>
        </authorList>
    </citation>
    <scope>VARIANT ATRX LYS-1742</scope>
</reference>
<reference key="53">
    <citation type="journal article" date="1999" name="Am. J. Med. Genet.">
        <title>Carpenter-Waziri syndrome results from a mutation in XNP.</title>
        <authorList>
            <person name="Abidi F."/>
            <person name="Schwartz C.E."/>
            <person name="Carpenter N.J."/>
            <person name="Villard L."/>
            <person name="Fontes M."/>
            <person name="Curtis M."/>
        </authorList>
    </citation>
    <scope>VARIANT MRXHF1 THR-2050</scope>
</reference>
<reference key="54">
    <citation type="journal article" date="1999" name="J. Med. Genet.">
        <title>Evaluation of a mutation screening strategy for sporadic cases of ATR-X syndrome.</title>
        <authorList>
            <person name="Villard L."/>
            <person name="Bonino M.-C."/>
            <person name="Abidi F."/>
            <person name="Ragusa A."/>
            <person name="Belougne J."/>
            <person name="Lossi A.-M."/>
            <person name="Seaver L."/>
            <person name="Bonnefont J.-P."/>
            <person name="Romano C."/>
            <person name="Fichera M."/>
            <person name="Lacombe D."/>
            <person name="Hanauer A."/>
            <person name="Philip N."/>
            <person name="Schwartz C.E."/>
            <person name="Fontes M."/>
        </authorList>
    </citation>
    <scope>VARIANTS ATRX GLU-175; 178-VAL--LYS-198 DEL; SER-190; PRO-219; LEU-246 AND CYS-249</scope>
</reference>
<reference key="55">
    <citation type="journal article" date="2000" name="Am. J. Med. Genet.">
        <title>Molecular genetic study of Japanese patients with X-linked alpha-thalassemia/mental retardation syndrome (ATR-X).</title>
        <authorList>
            <person name="Wada T."/>
            <person name="Kubota T."/>
            <person name="Fukushima Y."/>
            <person name="Saitoh S."/>
        </authorList>
    </citation>
    <scope>VARIANTS ATRX SER-179; LEU-190; ILE-194; CYS-246; PHE-1552; SER-1645 AND CYS-1847</scope>
</reference>
<reference key="56">
    <citation type="journal article" date="2000" name="Am. J. Med. Genet.">
        <title>Holmes-Gang syndrome is allelic with XLMR-hypotonic face syndrome.</title>
        <authorList>
            <person name="Stevenson R.E."/>
            <person name="Abidi F."/>
            <person name="Schwartz C.E."/>
            <person name="Lubs H.A."/>
            <person name="Holmes L.B."/>
        </authorList>
    </citation>
    <scope>VARIANT MRXHF1 TYR-220</scope>
</reference>
<reference key="57">
    <citation type="journal article" date="2002" name="Am. J. Med. Genet.">
        <title>Expanding phenotype of XNP mutations: mild to moderate mental retardation.</title>
        <authorList>
            <person name="Yntema H.G."/>
            <person name="Poppelaars F.A."/>
            <person name="Derksen E."/>
            <person name="Oudakker A.R."/>
            <person name="van Roosmalen T."/>
            <person name="Jacobs A."/>
            <person name="Obbema H."/>
            <person name="Brunner H.G."/>
            <person name="Hamel B.C.J."/>
            <person name="van Bokhoven H."/>
        </authorList>
    </citation>
    <scope>VARIANT ATRX MET-1621</scope>
</reference>
<reference key="58">
    <citation type="journal article" date="2005" name="Am. J. Med. Genet. A">
        <title>Asplenia in ATR-X syndrome: a second report.</title>
        <authorList>
            <person name="Leahy R.T."/>
            <person name="Philip R.K."/>
            <person name="Gibbons R.J."/>
            <person name="Fisher C."/>
            <person name="Suri M."/>
            <person name="Reardon W."/>
        </authorList>
    </citation>
    <scope>VARIANT MRXHF1 GLY-2271</scope>
</reference>
<reference key="59">
    <citation type="journal article" date="2005" name="Neurogenetics">
        <title>A missense mutation in the coiled-coil motif of the HP1-interacting domain of ATR-X in a family with X-linked mental retardation.</title>
        <authorList>
            <person name="Wieland I."/>
            <person name="Sabathil J."/>
            <person name="Ostendorf A."/>
            <person name="Rittinger O."/>
            <person name="Roepke A."/>
            <person name="Winnepenninckx B."/>
            <person name="Kooy F."/>
            <person name="Holinski-Feder E."/>
            <person name="Wieacker P."/>
        </authorList>
    </citation>
    <scope>VARIANT MRXHF1 SER-409</scope>
</reference>
<reference key="60">
    <citation type="journal article" date="2006" name="Am. J. Med. Genet. A">
        <title>ATRX syndrome in a girl with a heterozygous mutation in the ATRX Zn finger domain and a totally skewed X-inactivation pattern.</title>
        <authorList>
            <person name="Badens C."/>
            <person name="Martini N."/>
            <person name="Courrier S."/>
            <person name="DesPortes V."/>
            <person name="Touraine R."/>
            <person name="Levy N."/>
            <person name="Edery P."/>
        </authorList>
    </citation>
    <scope>VARIANT ATRX CYS-246</scope>
</reference>
<dbReference type="EC" id="3.6.4.12"/>
<dbReference type="EMBL" id="U72937">
    <property type="protein sequence ID" value="AAB49970.2"/>
    <property type="molecule type" value="mRNA"/>
</dbReference>
<dbReference type="EMBL" id="U72938">
    <property type="protein sequence ID" value="AAB49971.2"/>
    <property type="molecule type" value="mRNA"/>
</dbReference>
<dbReference type="EMBL" id="U72935">
    <property type="protein sequence ID" value="AAB40698.1"/>
    <property type="molecule type" value="Genomic_DNA"/>
</dbReference>
<dbReference type="EMBL" id="U72904">
    <property type="protein sequence ID" value="AAB40698.1"/>
    <property type="status" value="JOINED"/>
    <property type="molecule type" value="Genomic_DNA"/>
</dbReference>
<dbReference type="EMBL" id="U72905">
    <property type="protein sequence ID" value="AAB40698.1"/>
    <property type="status" value="JOINED"/>
    <property type="molecule type" value="Genomic_DNA"/>
</dbReference>
<dbReference type="EMBL" id="U72907">
    <property type="protein sequence ID" value="AAB40698.1"/>
    <property type="status" value="JOINED"/>
    <property type="molecule type" value="Genomic_DNA"/>
</dbReference>
<dbReference type="EMBL" id="U72908">
    <property type="protein sequence ID" value="AAB40698.1"/>
    <property type="status" value="JOINED"/>
    <property type="molecule type" value="Genomic_DNA"/>
</dbReference>
<dbReference type="EMBL" id="U72909">
    <property type="protein sequence ID" value="AAB40698.1"/>
    <property type="status" value="JOINED"/>
    <property type="molecule type" value="Genomic_DNA"/>
</dbReference>
<dbReference type="EMBL" id="U72910">
    <property type="protein sequence ID" value="AAB40698.1"/>
    <property type="status" value="JOINED"/>
    <property type="molecule type" value="Genomic_DNA"/>
</dbReference>
<dbReference type="EMBL" id="U72911">
    <property type="protein sequence ID" value="AAB40698.1"/>
    <property type="status" value="JOINED"/>
    <property type="molecule type" value="Genomic_DNA"/>
</dbReference>
<dbReference type="EMBL" id="U72912">
    <property type="protein sequence ID" value="AAB40698.1"/>
    <property type="status" value="JOINED"/>
    <property type="molecule type" value="Genomic_DNA"/>
</dbReference>
<dbReference type="EMBL" id="U72913">
    <property type="protein sequence ID" value="AAB40698.1"/>
    <property type="status" value="JOINED"/>
    <property type="molecule type" value="Genomic_DNA"/>
</dbReference>
<dbReference type="EMBL" id="U72914">
    <property type="protein sequence ID" value="AAB40698.1"/>
    <property type="status" value="JOINED"/>
    <property type="molecule type" value="Genomic_DNA"/>
</dbReference>
<dbReference type="EMBL" id="U72915">
    <property type="protein sequence ID" value="AAB40698.1"/>
    <property type="status" value="JOINED"/>
    <property type="molecule type" value="Genomic_DNA"/>
</dbReference>
<dbReference type="EMBL" id="U72916">
    <property type="protein sequence ID" value="AAB40698.1"/>
    <property type="status" value="JOINED"/>
    <property type="molecule type" value="Genomic_DNA"/>
</dbReference>
<dbReference type="EMBL" id="U72917">
    <property type="protein sequence ID" value="AAB40698.1"/>
    <property type="status" value="JOINED"/>
    <property type="molecule type" value="Genomic_DNA"/>
</dbReference>
<dbReference type="EMBL" id="U72918">
    <property type="protein sequence ID" value="AAB40698.1"/>
    <property type="status" value="JOINED"/>
    <property type="molecule type" value="Genomic_DNA"/>
</dbReference>
<dbReference type="EMBL" id="U72919">
    <property type="protein sequence ID" value="AAB40698.1"/>
    <property type="status" value="JOINED"/>
    <property type="molecule type" value="Genomic_DNA"/>
</dbReference>
<dbReference type="EMBL" id="U72920">
    <property type="protein sequence ID" value="AAB40698.1"/>
    <property type="status" value="JOINED"/>
    <property type="molecule type" value="Genomic_DNA"/>
</dbReference>
<dbReference type="EMBL" id="U72921">
    <property type="protein sequence ID" value="AAB40698.1"/>
    <property type="status" value="JOINED"/>
    <property type="molecule type" value="Genomic_DNA"/>
</dbReference>
<dbReference type="EMBL" id="U72922">
    <property type="protein sequence ID" value="AAB40698.1"/>
    <property type="status" value="JOINED"/>
    <property type="molecule type" value="Genomic_DNA"/>
</dbReference>
<dbReference type="EMBL" id="U72923">
    <property type="protein sequence ID" value="AAB40698.1"/>
    <property type="status" value="JOINED"/>
    <property type="molecule type" value="Genomic_DNA"/>
</dbReference>
<dbReference type="EMBL" id="U72924">
    <property type="protein sequence ID" value="AAB40698.1"/>
    <property type="status" value="JOINED"/>
    <property type="molecule type" value="Genomic_DNA"/>
</dbReference>
<dbReference type="EMBL" id="U72925">
    <property type="protein sequence ID" value="AAB40698.1"/>
    <property type="status" value="JOINED"/>
    <property type="molecule type" value="Genomic_DNA"/>
</dbReference>
<dbReference type="EMBL" id="U72926">
    <property type="protein sequence ID" value="AAB40698.1"/>
    <property type="status" value="JOINED"/>
    <property type="molecule type" value="Genomic_DNA"/>
</dbReference>
<dbReference type="EMBL" id="U72927">
    <property type="protein sequence ID" value="AAB40698.1"/>
    <property type="status" value="JOINED"/>
    <property type="molecule type" value="Genomic_DNA"/>
</dbReference>
<dbReference type="EMBL" id="U72928">
    <property type="protein sequence ID" value="AAB40698.1"/>
    <property type="status" value="JOINED"/>
    <property type="molecule type" value="Genomic_DNA"/>
</dbReference>
<dbReference type="EMBL" id="U72929">
    <property type="protein sequence ID" value="AAB40698.1"/>
    <property type="status" value="JOINED"/>
    <property type="molecule type" value="Genomic_DNA"/>
</dbReference>
<dbReference type="EMBL" id="U72930">
    <property type="protein sequence ID" value="AAB40698.1"/>
    <property type="status" value="JOINED"/>
    <property type="molecule type" value="Genomic_DNA"/>
</dbReference>
<dbReference type="EMBL" id="U72931">
    <property type="protein sequence ID" value="AAB40698.1"/>
    <property type="status" value="JOINED"/>
    <property type="molecule type" value="Genomic_DNA"/>
</dbReference>
<dbReference type="EMBL" id="U72932">
    <property type="protein sequence ID" value="AAB40698.1"/>
    <property type="status" value="JOINED"/>
    <property type="molecule type" value="Genomic_DNA"/>
</dbReference>
<dbReference type="EMBL" id="U72933">
    <property type="protein sequence ID" value="AAB40698.1"/>
    <property type="status" value="JOINED"/>
    <property type="molecule type" value="Genomic_DNA"/>
</dbReference>
<dbReference type="EMBL" id="U72934">
    <property type="protein sequence ID" value="AAB40698.1"/>
    <property type="status" value="JOINED"/>
    <property type="molecule type" value="Genomic_DNA"/>
</dbReference>
<dbReference type="EMBL" id="U72935">
    <property type="protein sequence ID" value="AAB40699.1"/>
    <property type="molecule type" value="Genomic_DNA"/>
</dbReference>
<dbReference type="EMBL" id="U72904">
    <property type="protein sequence ID" value="AAB40699.1"/>
    <property type="status" value="JOINED"/>
    <property type="molecule type" value="Genomic_DNA"/>
</dbReference>
<dbReference type="EMBL" id="U72907">
    <property type="protein sequence ID" value="AAB40699.1"/>
    <property type="status" value="JOINED"/>
    <property type="molecule type" value="Genomic_DNA"/>
</dbReference>
<dbReference type="EMBL" id="U72908">
    <property type="protein sequence ID" value="AAB40699.1"/>
    <property type="status" value="JOINED"/>
    <property type="molecule type" value="Genomic_DNA"/>
</dbReference>
<dbReference type="EMBL" id="U72909">
    <property type="protein sequence ID" value="AAB40699.1"/>
    <property type="status" value="JOINED"/>
    <property type="molecule type" value="Genomic_DNA"/>
</dbReference>
<dbReference type="EMBL" id="U72910">
    <property type="protein sequence ID" value="AAB40699.1"/>
    <property type="status" value="JOINED"/>
    <property type="molecule type" value="Genomic_DNA"/>
</dbReference>
<dbReference type="EMBL" id="U72911">
    <property type="protein sequence ID" value="AAB40699.1"/>
    <property type="status" value="JOINED"/>
    <property type="molecule type" value="Genomic_DNA"/>
</dbReference>
<dbReference type="EMBL" id="U72912">
    <property type="protein sequence ID" value="AAB40699.1"/>
    <property type="status" value="JOINED"/>
    <property type="molecule type" value="Genomic_DNA"/>
</dbReference>
<dbReference type="EMBL" id="U72913">
    <property type="protein sequence ID" value="AAB40699.1"/>
    <property type="status" value="JOINED"/>
    <property type="molecule type" value="Genomic_DNA"/>
</dbReference>
<dbReference type="EMBL" id="U72914">
    <property type="protein sequence ID" value="AAB40699.1"/>
    <property type="status" value="JOINED"/>
    <property type="molecule type" value="Genomic_DNA"/>
</dbReference>
<dbReference type="EMBL" id="U72915">
    <property type="protein sequence ID" value="AAB40699.1"/>
    <property type="status" value="JOINED"/>
    <property type="molecule type" value="Genomic_DNA"/>
</dbReference>
<dbReference type="EMBL" id="U72916">
    <property type="protein sequence ID" value="AAB40699.1"/>
    <property type="status" value="JOINED"/>
    <property type="molecule type" value="Genomic_DNA"/>
</dbReference>
<dbReference type="EMBL" id="U72918">
    <property type="protein sequence ID" value="AAB40699.1"/>
    <property type="status" value="JOINED"/>
    <property type="molecule type" value="Genomic_DNA"/>
</dbReference>
<dbReference type="EMBL" id="U72919">
    <property type="protein sequence ID" value="AAB40699.1"/>
    <property type="status" value="JOINED"/>
    <property type="molecule type" value="Genomic_DNA"/>
</dbReference>
<dbReference type="EMBL" id="U72920">
    <property type="protein sequence ID" value="AAB40699.1"/>
    <property type="status" value="JOINED"/>
    <property type="molecule type" value="Genomic_DNA"/>
</dbReference>
<dbReference type="EMBL" id="U72921">
    <property type="protein sequence ID" value="AAB40699.1"/>
    <property type="status" value="JOINED"/>
    <property type="molecule type" value="Genomic_DNA"/>
</dbReference>
<dbReference type="EMBL" id="U72922">
    <property type="protein sequence ID" value="AAB40699.1"/>
    <property type="status" value="JOINED"/>
    <property type="molecule type" value="Genomic_DNA"/>
</dbReference>
<dbReference type="EMBL" id="U72923">
    <property type="protein sequence ID" value="AAB40699.1"/>
    <property type="status" value="JOINED"/>
    <property type="molecule type" value="Genomic_DNA"/>
</dbReference>
<dbReference type="EMBL" id="U72924">
    <property type="protein sequence ID" value="AAB40699.1"/>
    <property type="status" value="JOINED"/>
    <property type="molecule type" value="Genomic_DNA"/>
</dbReference>
<dbReference type="EMBL" id="U72925">
    <property type="protein sequence ID" value="AAB40699.1"/>
    <property type="status" value="JOINED"/>
    <property type="molecule type" value="Genomic_DNA"/>
</dbReference>
<dbReference type="EMBL" id="U72926">
    <property type="protein sequence ID" value="AAB40699.1"/>
    <property type="status" value="JOINED"/>
    <property type="molecule type" value="Genomic_DNA"/>
</dbReference>
<dbReference type="EMBL" id="U72927">
    <property type="protein sequence ID" value="AAB40699.1"/>
    <property type="status" value="JOINED"/>
    <property type="molecule type" value="Genomic_DNA"/>
</dbReference>
<dbReference type="EMBL" id="U72928">
    <property type="protein sequence ID" value="AAB40699.1"/>
    <property type="status" value="JOINED"/>
    <property type="molecule type" value="Genomic_DNA"/>
</dbReference>
<dbReference type="EMBL" id="U72929">
    <property type="protein sequence ID" value="AAB40699.1"/>
    <property type="status" value="JOINED"/>
    <property type="molecule type" value="Genomic_DNA"/>
</dbReference>
<dbReference type="EMBL" id="U72930">
    <property type="protein sequence ID" value="AAB40699.1"/>
    <property type="status" value="JOINED"/>
    <property type="molecule type" value="Genomic_DNA"/>
</dbReference>
<dbReference type="EMBL" id="U72931">
    <property type="protein sequence ID" value="AAB40699.1"/>
    <property type="status" value="JOINED"/>
    <property type="molecule type" value="Genomic_DNA"/>
</dbReference>
<dbReference type="EMBL" id="U72932">
    <property type="protein sequence ID" value="AAB40699.1"/>
    <property type="status" value="JOINED"/>
    <property type="molecule type" value="Genomic_DNA"/>
</dbReference>
<dbReference type="EMBL" id="U72933">
    <property type="protein sequence ID" value="AAB40699.1"/>
    <property type="status" value="JOINED"/>
    <property type="molecule type" value="Genomic_DNA"/>
</dbReference>
<dbReference type="EMBL" id="U72934">
    <property type="protein sequence ID" value="AAB40699.1"/>
    <property type="status" value="JOINED"/>
    <property type="molecule type" value="Genomic_DNA"/>
</dbReference>
<dbReference type="EMBL" id="U72936">
    <property type="protein sequence ID" value="AAB49969.1"/>
    <property type="molecule type" value="mRNA"/>
</dbReference>
<dbReference type="EMBL" id="U72935">
    <property type="protein sequence ID" value="AAB40700.1"/>
    <property type="molecule type" value="Genomic_DNA"/>
</dbReference>
<dbReference type="EMBL" id="U72908">
    <property type="protein sequence ID" value="AAB40700.1"/>
    <property type="status" value="JOINED"/>
    <property type="molecule type" value="Genomic_DNA"/>
</dbReference>
<dbReference type="EMBL" id="U72909">
    <property type="protein sequence ID" value="AAB40700.1"/>
    <property type="status" value="JOINED"/>
    <property type="molecule type" value="Genomic_DNA"/>
</dbReference>
<dbReference type="EMBL" id="U72910">
    <property type="protein sequence ID" value="AAB40700.1"/>
    <property type="status" value="JOINED"/>
    <property type="molecule type" value="Genomic_DNA"/>
</dbReference>
<dbReference type="EMBL" id="U72911">
    <property type="protein sequence ID" value="AAB40700.1"/>
    <property type="status" value="JOINED"/>
    <property type="molecule type" value="Genomic_DNA"/>
</dbReference>
<dbReference type="EMBL" id="U72912">
    <property type="protein sequence ID" value="AAB40700.1"/>
    <property type="status" value="JOINED"/>
    <property type="molecule type" value="Genomic_DNA"/>
</dbReference>
<dbReference type="EMBL" id="U72913">
    <property type="protein sequence ID" value="AAB40700.1"/>
    <property type="status" value="JOINED"/>
    <property type="molecule type" value="Genomic_DNA"/>
</dbReference>
<dbReference type="EMBL" id="U72914">
    <property type="protein sequence ID" value="AAB40700.1"/>
    <property type="status" value="JOINED"/>
    <property type="molecule type" value="Genomic_DNA"/>
</dbReference>
<dbReference type="EMBL" id="U72915">
    <property type="protein sequence ID" value="AAB40700.1"/>
    <property type="status" value="JOINED"/>
    <property type="molecule type" value="Genomic_DNA"/>
</dbReference>
<dbReference type="EMBL" id="U72916">
    <property type="protein sequence ID" value="AAB40700.1"/>
    <property type="status" value="JOINED"/>
    <property type="molecule type" value="Genomic_DNA"/>
</dbReference>
<dbReference type="EMBL" id="U72917">
    <property type="protein sequence ID" value="AAB40700.1"/>
    <property type="status" value="JOINED"/>
    <property type="molecule type" value="Genomic_DNA"/>
</dbReference>
<dbReference type="EMBL" id="U72918">
    <property type="protein sequence ID" value="AAB40700.1"/>
    <property type="status" value="JOINED"/>
    <property type="molecule type" value="Genomic_DNA"/>
</dbReference>
<dbReference type="EMBL" id="U72920">
    <property type="protein sequence ID" value="AAB40700.1"/>
    <property type="status" value="JOINED"/>
    <property type="molecule type" value="Genomic_DNA"/>
</dbReference>
<dbReference type="EMBL" id="U72921">
    <property type="protein sequence ID" value="AAB40700.1"/>
    <property type="status" value="JOINED"/>
    <property type="molecule type" value="Genomic_DNA"/>
</dbReference>
<dbReference type="EMBL" id="U72922">
    <property type="protein sequence ID" value="AAB40700.1"/>
    <property type="status" value="JOINED"/>
    <property type="molecule type" value="Genomic_DNA"/>
</dbReference>
<dbReference type="EMBL" id="U72923">
    <property type="protein sequence ID" value="AAB40700.1"/>
    <property type="status" value="JOINED"/>
    <property type="molecule type" value="Genomic_DNA"/>
</dbReference>
<dbReference type="EMBL" id="U72924">
    <property type="protein sequence ID" value="AAB40700.1"/>
    <property type="status" value="JOINED"/>
    <property type="molecule type" value="Genomic_DNA"/>
</dbReference>
<dbReference type="EMBL" id="U72925">
    <property type="protein sequence ID" value="AAB40700.1"/>
    <property type="status" value="JOINED"/>
    <property type="molecule type" value="Genomic_DNA"/>
</dbReference>
<dbReference type="EMBL" id="U72926">
    <property type="protein sequence ID" value="AAB40700.1"/>
    <property type="status" value="JOINED"/>
    <property type="molecule type" value="Genomic_DNA"/>
</dbReference>
<dbReference type="EMBL" id="U72927">
    <property type="protein sequence ID" value="AAB40700.1"/>
    <property type="status" value="JOINED"/>
    <property type="molecule type" value="Genomic_DNA"/>
</dbReference>
<dbReference type="EMBL" id="U72928">
    <property type="protein sequence ID" value="AAB40700.1"/>
    <property type="status" value="JOINED"/>
    <property type="molecule type" value="Genomic_DNA"/>
</dbReference>
<dbReference type="EMBL" id="U72929">
    <property type="protein sequence ID" value="AAB40700.1"/>
    <property type="status" value="JOINED"/>
    <property type="molecule type" value="Genomic_DNA"/>
</dbReference>
<dbReference type="EMBL" id="U72930">
    <property type="protein sequence ID" value="AAB40700.1"/>
    <property type="status" value="JOINED"/>
    <property type="molecule type" value="Genomic_DNA"/>
</dbReference>
<dbReference type="EMBL" id="U72931">
    <property type="protein sequence ID" value="AAB40700.1"/>
    <property type="status" value="JOINED"/>
    <property type="molecule type" value="Genomic_DNA"/>
</dbReference>
<dbReference type="EMBL" id="U72932">
    <property type="protein sequence ID" value="AAB40700.1"/>
    <property type="status" value="JOINED"/>
    <property type="molecule type" value="Genomic_DNA"/>
</dbReference>
<dbReference type="EMBL" id="U72933">
    <property type="protein sequence ID" value="AAB40700.1"/>
    <property type="status" value="JOINED"/>
    <property type="molecule type" value="Genomic_DNA"/>
</dbReference>
<dbReference type="EMBL" id="U72934">
    <property type="protein sequence ID" value="AAB40700.1"/>
    <property type="status" value="JOINED"/>
    <property type="molecule type" value="Genomic_DNA"/>
</dbReference>
<dbReference type="EMBL" id="U75653">
    <property type="protein sequence ID" value="AAC51655.1"/>
    <property type="molecule type" value="Genomic_DNA"/>
</dbReference>
<dbReference type="EMBL" id="U97103">
    <property type="protein sequence ID" value="AAC51657.1"/>
    <property type="molecule type" value="Genomic_DNA"/>
</dbReference>
<dbReference type="EMBL" id="AF000157">
    <property type="protein sequence ID" value="AAC51657.1"/>
    <property type="status" value="JOINED"/>
    <property type="molecule type" value="Genomic_DNA"/>
</dbReference>
<dbReference type="EMBL" id="AF000158">
    <property type="protein sequence ID" value="AAC51657.1"/>
    <property type="status" value="JOINED"/>
    <property type="molecule type" value="Genomic_DNA"/>
</dbReference>
<dbReference type="EMBL" id="AF000159">
    <property type="protein sequence ID" value="AAC51657.1"/>
    <property type="status" value="JOINED"/>
    <property type="molecule type" value="Genomic_DNA"/>
</dbReference>
<dbReference type="EMBL" id="AF000160">
    <property type="protein sequence ID" value="AAC51657.1"/>
    <property type="status" value="JOINED"/>
    <property type="molecule type" value="Genomic_DNA"/>
</dbReference>
<dbReference type="EMBL" id="U97080">
    <property type="protein sequence ID" value="AAC51657.1"/>
    <property type="status" value="JOINED"/>
    <property type="molecule type" value="Genomic_DNA"/>
</dbReference>
<dbReference type="EMBL" id="U97081">
    <property type="protein sequence ID" value="AAC51657.1"/>
    <property type="status" value="JOINED"/>
    <property type="molecule type" value="Genomic_DNA"/>
</dbReference>
<dbReference type="EMBL" id="U97082">
    <property type="protein sequence ID" value="AAC51657.1"/>
    <property type="status" value="JOINED"/>
    <property type="molecule type" value="Genomic_DNA"/>
</dbReference>
<dbReference type="EMBL" id="U97083">
    <property type="protein sequence ID" value="AAC51657.1"/>
    <property type="status" value="JOINED"/>
    <property type="molecule type" value="Genomic_DNA"/>
</dbReference>
<dbReference type="EMBL" id="U97084">
    <property type="protein sequence ID" value="AAC51657.1"/>
    <property type="status" value="JOINED"/>
    <property type="molecule type" value="Genomic_DNA"/>
</dbReference>
<dbReference type="EMBL" id="U97085">
    <property type="protein sequence ID" value="AAC51657.1"/>
    <property type="status" value="JOINED"/>
    <property type="molecule type" value="Genomic_DNA"/>
</dbReference>
<dbReference type="EMBL" id="U97086">
    <property type="protein sequence ID" value="AAC51657.1"/>
    <property type="status" value="JOINED"/>
    <property type="molecule type" value="Genomic_DNA"/>
</dbReference>
<dbReference type="EMBL" id="U97087">
    <property type="protein sequence ID" value="AAC51657.1"/>
    <property type="status" value="JOINED"/>
    <property type="molecule type" value="Genomic_DNA"/>
</dbReference>
<dbReference type="EMBL" id="U97088">
    <property type="protein sequence ID" value="AAC51657.1"/>
    <property type="status" value="JOINED"/>
    <property type="molecule type" value="Genomic_DNA"/>
</dbReference>
<dbReference type="EMBL" id="U97089">
    <property type="protein sequence ID" value="AAC51657.1"/>
    <property type="status" value="JOINED"/>
    <property type="molecule type" value="Genomic_DNA"/>
</dbReference>
<dbReference type="EMBL" id="U97090">
    <property type="protein sequence ID" value="AAC51657.1"/>
    <property type="status" value="JOINED"/>
    <property type="molecule type" value="Genomic_DNA"/>
</dbReference>
<dbReference type="EMBL" id="U97091">
    <property type="protein sequence ID" value="AAC51657.1"/>
    <property type="status" value="JOINED"/>
    <property type="molecule type" value="Genomic_DNA"/>
</dbReference>
<dbReference type="EMBL" id="U97092">
    <property type="protein sequence ID" value="AAC51657.1"/>
    <property type="status" value="JOINED"/>
    <property type="molecule type" value="Genomic_DNA"/>
</dbReference>
<dbReference type="EMBL" id="U97093">
    <property type="protein sequence ID" value="AAC51657.1"/>
    <property type="status" value="JOINED"/>
    <property type="molecule type" value="Genomic_DNA"/>
</dbReference>
<dbReference type="EMBL" id="U97094">
    <property type="protein sequence ID" value="AAC51657.1"/>
    <property type="status" value="JOINED"/>
    <property type="molecule type" value="Genomic_DNA"/>
</dbReference>
<dbReference type="EMBL" id="U97095">
    <property type="protein sequence ID" value="AAC51657.1"/>
    <property type="status" value="JOINED"/>
    <property type="molecule type" value="Genomic_DNA"/>
</dbReference>
<dbReference type="EMBL" id="U97096">
    <property type="protein sequence ID" value="AAC51657.1"/>
    <property type="status" value="JOINED"/>
    <property type="molecule type" value="Genomic_DNA"/>
</dbReference>
<dbReference type="EMBL" id="U97097">
    <property type="protein sequence ID" value="AAC51657.1"/>
    <property type="status" value="JOINED"/>
    <property type="molecule type" value="Genomic_DNA"/>
</dbReference>
<dbReference type="EMBL" id="U97098">
    <property type="protein sequence ID" value="AAC51657.1"/>
    <property type="status" value="JOINED"/>
    <property type="molecule type" value="Genomic_DNA"/>
</dbReference>
<dbReference type="EMBL" id="U97099">
    <property type="protein sequence ID" value="AAC51657.1"/>
    <property type="status" value="JOINED"/>
    <property type="molecule type" value="Genomic_DNA"/>
</dbReference>
<dbReference type="EMBL" id="U97100">
    <property type="protein sequence ID" value="AAC51657.1"/>
    <property type="status" value="JOINED"/>
    <property type="molecule type" value="Genomic_DNA"/>
</dbReference>
<dbReference type="EMBL" id="U97101">
    <property type="protein sequence ID" value="AAC51657.1"/>
    <property type="status" value="JOINED"/>
    <property type="molecule type" value="Genomic_DNA"/>
</dbReference>
<dbReference type="EMBL" id="U97102">
    <property type="protein sequence ID" value="AAC51657.1"/>
    <property type="status" value="JOINED"/>
    <property type="molecule type" value="Genomic_DNA"/>
</dbReference>
<dbReference type="EMBL" id="AB102641">
    <property type="protein sequence ID" value="BAC81110.1"/>
    <property type="molecule type" value="mRNA"/>
</dbReference>
<dbReference type="EMBL" id="AB101681">
    <property type="protein sequence ID" value="BAC80270.1"/>
    <property type="molecule type" value="Genomic_DNA"/>
</dbReference>
<dbReference type="EMBL" id="AB101682">
    <property type="protein sequence ID" value="BAC80271.1"/>
    <property type="molecule type" value="Genomic_DNA"/>
</dbReference>
<dbReference type="EMBL" id="AB101683">
    <property type="protein sequence ID" value="BAC80272.1"/>
    <property type="molecule type" value="Genomic_DNA"/>
</dbReference>
<dbReference type="EMBL" id="AB101685">
    <property type="protein sequence ID" value="BAC80274.1"/>
    <property type="molecule type" value="Genomic_DNA"/>
</dbReference>
<dbReference type="EMBL" id="AB101687">
    <property type="protein sequence ID" value="BAC80276.1"/>
    <property type="molecule type" value="Genomic_DNA"/>
</dbReference>
<dbReference type="EMBL" id="AB101689">
    <property type="protein sequence ID" value="BAC80278.1"/>
    <property type="molecule type" value="Genomic_DNA"/>
</dbReference>
<dbReference type="EMBL" id="AB101691">
    <property type="protein sequence ID" value="BAC80280.1"/>
    <property type="molecule type" value="Genomic_DNA"/>
</dbReference>
<dbReference type="EMBL" id="AB101693">
    <property type="protein sequence ID" value="BAC80282.1"/>
    <property type="molecule type" value="Genomic_DNA"/>
</dbReference>
<dbReference type="EMBL" id="AB101695">
    <property type="protein sequence ID" value="BAC80284.1"/>
    <property type="molecule type" value="Genomic_DNA"/>
</dbReference>
<dbReference type="EMBL" id="AB101700">
    <property type="protein sequence ID" value="BAC80289.1"/>
    <property type="molecule type" value="Genomic_DNA"/>
</dbReference>
<dbReference type="EMBL" id="AB101699">
    <property type="protein sequence ID" value="BAC80288.1"/>
    <property type="molecule type" value="Genomic_DNA"/>
</dbReference>
<dbReference type="EMBL" id="AB101698">
    <property type="protein sequence ID" value="BAC80287.1"/>
    <property type="molecule type" value="Genomic_DNA"/>
</dbReference>
<dbReference type="EMBL" id="AB101697">
    <property type="protein sequence ID" value="BAC80286.1"/>
    <property type="molecule type" value="Genomic_DNA"/>
</dbReference>
<dbReference type="EMBL" id="AB101696">
    <property type="protein sequence ID" value="BAC80285.1"/>
    <property type="molecule type" value="Genomic_DNA"/>
</dbReference>
<dbReference type="EMBL" id="AB101694">
    <property type="protein sequence ID" value="BAC80283.1"/>
    <property type="molecule type" value="Genomic_DNA"/>
</dbReference>
<dbReference type="EMBL" id="AB101692">
    <property type="protein sequence ID" value="BAC80281.1"/>
    <property type="molecule type" value="Genomic_DNA"/>
</dbReference>
<dbReference type="EMBL" id="AB101690">
    <property type="protein sequence ID" value="BAC80279.1"/>
    <property type="molecule type" value="Genomic_DNA"/>
</dbReference>
<dbReference type="EMBL" id="AB101688">
    <property type="protein sequence ID" value="BAC80277.1"/>
    <property type="molecule type" value="Genomic_DNA"/>
</dbReference>
<dbReference type="EMBL" id="AB101686">
    <property type="protein sequence ID" value="BAC80275.1"/>
    <property type="molecule type" value="Genomic_DNA"/>
</dbReference>
<dbReference type="EMBL" id="AB101684">
    <property type="protein sequence ID" value="BAC80273.1"/>
    <property type="molecule type" value="Genomic_DNA"/>
</dbReference>
<dbReference type="EMBL" id="AB208928">
    <property type="protein sequence ID" value="BAD92165.1"/>
    <property type="status" value="ALT_INIT"/>
    <property type="molecule type" value="mRNA"/>
</dbReference>
<dbReference type="EMBL" id="AB209545">
    <property type="protein sequence ID" value="BAD92782.1"/>
    <property type="molecule type" value="mRNA"/>
</dbReference>
<dbReference type="EMBL" id="AL121874">
    <property type="protein sequence ID" value="CAB90351.2"/>
    <property type="molecule type" value="Genomic_DNA"/>
</dbReference>
<dbReference type="EMBL" id="AL121874">
    <property type="protein sequence ID" value="CAI40710.1"/>
    <property type="molecule type" value="Genomic_DNA"/>
</dbReference>
<dbReference type="EMBL" id="AL109753">
    <property type="protein sequence ID" value="CAI40710.1"/>
    <property type="status" value="JOINED"/>
    <property type="molecule type" value="Genomic_DNA"/>
</dbReference>
<dbReference type="EMBL" id="Z84487">
    <property type="protein sequence ID" value="CAI40710.1"/>
    <property type="status" value="JOINED"/>
    <property type="molecule type" value="Genomic_DNA"/>
</dbReference>
<dbReference type="EMBL" id="Z84487">
    <property type="protein sequence ID" value="CAI42674.1"/>
    <property type="molecule type" value="Genomic_DNA"/>
</dbReference>
<dbReference type="EMBL" id="AL109753">
    <property type="protein sequence ID" value="CAI42674.1"/>
    <property type="status" value="JOINED"/>
    <property type="molecule type" value="Genomic_DNA"/>
</dbReference>
<dbReference type="EMBL" id="AL121874">
    <property type="protein sequence ID" value="CAI42674.1"/>
    <property type="status" value="JOINED"/>
    <property type="molecule type" value="Genomic_DNA"/>
</dbReference>
<dbReference type="EMBL" id="Z84487">
    <property type="protein sequence ID" value="CAI42675.1"/>
    <property type="molecule type" value="Genomic_DNA"/>
</dbReference>
<dbReference type="EMBL" id="AL109753">
    <property type="protein sequence ID" value="CAI42675.1"/>
    <property type="status" value="JOINED"/>
    <property type="molecule type" value="Genomic_DNA"/>
</dbReference>
<dbReference type="EMBL" id="AL121874">
    <property type="protein sequence ID" value="CAI42675.1"/>
    <property type="status" value="JOINED"/>
    <property type="molecule type" value="Genomic_DNA"/>
</dbReference>
<dbReference type="EMBL" id="AL109753">
    <property type="protein sequence ID" value="CAI43115.1"/>
    <property type="molecule type" value="Genomic_DNA"/>
</dbReference>
<dbReference type="EMBL" id="AL121874">
    <property type="protein sequence ID" value="CAI43115.1"/>
    <property type="status" value="JOINED"/>
    <property type="molecule type" value="Genomic_DNA"/>
</dbReference>
<dbReference type="EMBL" id="Z84487">
    <property type="protein sequence ID" value="CAI43115.1"/>
    <property type="status" value="JOINED"/>
    <property type="molecule type" value="Genomic_DNA"/>
</dbReference>
<dbReference type="EMBL" id="AL109753">
    <property type="protein sequence ID" value="CAI43116.1"/>
    <property type="molecule type" value="Genomic_DNA"/>
</dbReference>
<dbReference type="EMBL" id="AL121874">
    <property type="protein sequence ID" value="CAI43116.1"/>
    <property type="status" value="JOINED"/>
    <property type="molecule type" value="Genomic_DNA"/>
</dbReference>
<dbReference type="EMBL" id="Z84487">
    <property type="protein sequence ID" value="CAI43116.1"/>
    <property type="status" value="JOINED"/>
    <property type="molecule type" value="Genomic_DNA"/>
</dbReference>
<dbReference type="EMBL" id="CH471104">
    <property type="protein sequence ID" value="EAW98611.1"/>
    <property type="molecule type" value="Genomic_DNA"/>
</dbReference>
<dbReference type="EMBL" id="CH471104">
    <property type="protein sequence ID" value="EAW98615.1"/>
    <property type="molecule type" value="Genomic_DNA"/>
</dbReference>
<dbReference type="EMBL" id="U09820">
    <property type="protein sequence ID" value="AAC50069.1"/>
    <property type="status" value="ALT_FRAME"/>
    <property type="molecule type" value="mRNA"/>
</dbReference>
<dbReference type="EMBL" id="L34363">
    <property type="protein sequence ID" value="AAA20872.1"/>
    <property type="status" value="ALT_SEQ"/>
    <property type="molecule type" value="Genomic_DNA"/>
</dbReference>
<dbReference type="EMBL" id="X83753">
    <property type="protein sequence ID" value="CAA58711.1"/>
    <property type="molecule type" value="Genomic_DNA"/>
</dbReference>
<dbReference type="CCDS" id="CCDS14434.1">
    <molecule id="P46100-1"/>
</dbReference>
<dbReference type="CCDS" id="CCDS14435.1">
    <molecule id="P46100-4"/>
</dbReference>
<dbReference type="PIR" id="I38614">
    <property type="entry name" value="I38614"/>
</dbReference>
<dbReference type="PIR" id="I54367">
    <property type="entry name" value="I54367"/>
</dbReference>
<dbReference type="RefSeq" id="NP_000480.3">
    <molecule id="P46100-1"/>
    <property type="nucleotide sequence ID" value="NM_000489.4"/>
</dbReference>
<dbReference type="RefSeq" id="NP_612114.2">
    <molecule id="P46100-4"/>
    <property type="nucleotide sequence ID" value="NM_138270.5"/>
</dbReference>
<dbReference type="PDB" id="2JM1">
    <property type="method" value="NMR"/>
    <property type="chains" value="A=159-296"/>
</dbReference>
<dbReference type="PDB" id="2LBM">
    <property type="method" value="NMR"/>
    <property type="chains" value="A=163-296"/>
</dbReference>
<dbReference type="PDB" id="2LD1">
    <property type="method" value="NMR"/>
    <property type="chains" value="A=163-296"/>
</dbReference>
<dbReference type="PDB" id="3QL9">
    <property type="method" value="X-ray"/>
    <property type="resolution" value="0.93 A"/>
    <property type="chains" value="A=167-289"/>
</dbReference>
<dbReference type="PDB" id="3QLA">
    <property type="method" value="X-ray"/>
    <property type="resolution" value="1.60 A"/>
    <property type="chains" value="A/D=167-289"/>
</dbReference>
<dbReference type="PDB" id="3QLC">
    <property type="method" value="X-ray"/>
    <property type="resolution" value="2.50 A"/>
    <property type="chains" value="A/B=167-289"/>
</dbReference>
<dbReference type="PDB" id="3QLN">
    <property type="method" value="X-ray"/>
    <property type="resolution" value="1.90 A"/>
    <property type="chains" value="A/B=167-289"/>
</dbReference>
<dbReference type="PDB" id="4W5A">
    <property type="method" value="X-ray"/>
    <property type="resolution" value="2.60 A"/>
    <property type="chains" value="A/B/E=167-289"/>
</dbReference>
<dbReference type="PDB" id="5GRQ">
    <property type="method" value="X-ray"/>
    <property type="resolution" value="1.58 A"/>
    <property type="chains" value="C/D=1256-1285"/>
</dbReference>
<dbReference type="PDB" id="5Y18">
    <property type="method" value="X-ray"/>
    <property type="resolution" value="2.20 A"/>
    <property type="chains" value="B=1268-1289"/>
</dbReference>
<dbReference type="PDB" id="5Y6O">
    <property type="method" value="X-ray"/>
    <property type="resolution" value="3.10 A"/>
    <property type="chains" value="A/B/C/D/E/F/G/H/I=1265-1288"/>
</dbReference>
<dbReference type="PDB" id="6G0O">
    <property type="method" value="X-ray"/>
    <property type="resolution" value="1.40 A"/>
    <property type="chains" value="B=1027-1037"/>
</dbReference>
<dbReference type="PDBsum" id="2JM1"/>
<dbReference type="PDBsum" id="2LBM"/>
<dbReference type="PDBsum" id="2LD1"/>
<dbReference type="PDBsum" id="3QL9"/>
<dbReference type="PDBsum" id="3QLA"/>
<dbReference type="PDBsum" id="3QLC"/>
<dbReference type="PDBsum" id="3QLN"/>
<dbReference type="PDBsum" id="4W5A"/>
<dbReference type="PDBsum" id="5GRQ"/>
<dbReference type="PDBsum" id="5Y18"/>
<dbReference type="PDBsum" id="5Y6O"/>
<dbReference type="PDBsum" id="6G0O"/>
<dbReference type="BMRB" id="P46100"/>
<dbReference type="SMR" id="P46100"/>
<dbReference type="BioGRID" id="107028">
    <property type="interactions" value="275"/>
</dbReference>
<dbReference type="CORUM" id="P46100"/>
<dbReference type="DIP" id="DIP-31532N"/>
<dbReference type="FunCoup" id="P46100">
    <property type="interactions" value="2388"/>
</dbReference>
<dbReference type="IntAct" id="P46100">
    <property type="interactions" value="78"/>
</dbReference>
<dbReference type="MINT" id="P46100"/>
<dbReference type="STRING" id="9606.ENSP00000362441"/>
<dbReference type="CarbonylDB" id="P46100"/>
<dbReference type="GlyCosmos" id="P46100">
    <property type="glycosylation" value="1 site, 1 glycan"/>
</dbReference>
<dbReference type="GlyGen" id="P46100">
    <property type="glycosylation" value="18 sites, 1 O-linked glycan (18 sites)"/>
</dbReference>
<dbReference type="iPTMnet" id="P46100"/>
<dbReference type="MetOSite" id="P46100"/>
<dbReference type="PhosphoSitePlus" id="P46100"/>
<dbReference type="SwissPalm" id="P46100"/>
<dbReference type="BioMuta" id="ATRX"/>
<dbReference type="DMDM" id="311033500"/>
<dbReference type="jPOST" id="P46100"/>
<dbReference type="MassIVE" id="P46100"/>
<dbReference type="PaxDb" id="9606-ENSP00000362441"/>
<dbReference type="PeptideAtlas" id="P46100"/>
<dbReference type="ProteomicsDB" id="55726">
    <molecule id="P46100-1"/>
</dbReference>
<dbReference type="ProteomicsDB" id="55727">
    <molecule id="P46100-2"/>
</dbReference>
<dbReference type="ProteomicsDB" id="55728">
    <molecule id="P46100-3"/>
</dbReference>
<dbReference type="ProteomicsDB" id="55729">
    <molecule id="P46100-4"/>
</dbReference>
<dbReference type="ProteomicsDB" id="55730">
    <molecule id="P46100-5"/>
</dbReference>
<dbReference type="ProteomicsDB" id="55731">
    <molecule id="P46100-6"/>
</dbReference>
<dbReference type="Pumba" id="P46100"/>
<dbReference type="Antibodypedia" id="460">
    <property type="antibodies" value="456 antibodies from 38 providers"/>
</dbReference>
<dbReference type="DNASU" id="546"/>
<dbReference type="Ensembl" id="ENST00000373344.11">
    <molecule id="P46100-1"/>
    <property type="protein sequence ID" value="ENSP00000362441.4"/>
    <property type="gene ID" value="ENSG00000085224.23"/>
</dbReference>
<dbReference type="Ensembl" id="ENST00000395603.7">
    <molecule id="P46100-4"/>
    <property type="protein sequence ID" value="ENSP00000378967.3"/>
    <property type="gene ID" value="ENSG00000085224.23"/>
</dbReference>
<dbReference type="GeneID" id="546"/>
<dbReference type="KEGG" id="hsa:546"/>
<dbReference type="MANE-Select" id="ENST00000373344.11">
    <property type="protein sequence ID" value="ENSP00000362441.4"/>
    <property type="RefSeq nucleotide sequence ID" value="NM_000489.6"/>
    <property type="RefSeq protein sequence ID" value="NP_000480.3"/>
</dbReference>
<dbReference type="UCSC" id="uc004ecp.5">
    <molecule id="P46100-1"/>
    <property type="organism name" value="human"/>
</dbReference>
<dbReference type="AGR" id="HGNC:886"/>
<dbReference type="CTD" id="546"/>
<dbReference type="DisGeNET" id="546"/>
<dbReference type="GeneCards" id="ATRX"/>
<dbReference type="GeneReviews" id="ATRX"/>
<dbReference type="HGNC" id="HGNC:886">
    <property type="gene designation" value="ATRX"/>
</dbReference>
<dbReference type="HPA" id="ENSG00000085224">
    <property type="expression patterns" value="Low tissue specificity"/>
</dbReference>
<dbReference type="MalaCards" id="ATRX"/>
<dbReference type="MIM" id="300032">
    <property type="type" value="gene"/>
</dbReference>
<dbReference type="MIM" id="300448">
    <property type="type" value="phenotype"/>
</dbReference>
<dbReference type="MIM" id="301040">
    <property type="type" value="phenotype"/>
</dbReference>
<dbReference type="MIM" id="309580">
    <property type="type" value="phenotype"/>
</dbReference>
<dbReference type="neXtProt" id="NX_P46100"/>
<dbReference type="OpenTargets" id="ENSG00000085224"/>
<dbReference type="Orphanet" id="231401">
    <property type="disease" value="Alpha-thalassemia-myelodysplastic syndrome"/>
</dbReference>
<dbReference type="Orphanet" id="96253">
    <property type="disease" value="Cushing disease"/>
</dbReference>
<dbReference type="Orphanet" id="100075">
    <property type="disease" value="Neuroendocrine tumor of stomach"/>
</dbReference>
<dbReference type="Orphanet" id="847">
    <property type="disease" value="X-linked alpha-thalassemia-intellectual disability syndrome"/>
</dbReference>
<dbReference type="PharmGKB" id="PA25179"/>
<dbReference type="VEuPathDB" id="HostDB:ENSG00000085224"/>
<dbReference type="eggNOG" id="KOG1015">
    <property type="taxonomic scope" value="Eukaryota"/>
</dbReference>
<dbReference type="GeneTree" id="ENSGT00940000155902"/>
<dbReference type="HOGENOM" id="CLU_000863_1_0_1"/>
<dbReference type="InParanoid" id="P46100"/>
<dbReference type="OMA" id="PPGLMMN"/>
<dbReference type="OrthoDB" id="2020972at2759"/>
<dbReference type="PAN-GO" id="P46100">
    <property type="GO annotations" value="7 GO annotations based on evolutionary models"/>
</dbReference>
<dbReference type="PhylomeDB" id="P46100"/>
<dbReference type="TreeFam" id="TF313172"/>
<dbReference type="PathwayCommons" id="P46100"/>
<dbReference type="Reactome" id="R-HSA-9670095">
    <property type="pathway name" value="Inhibition of DNA recombination at telomere"/>
</dbReference>
<dbReference type="Reactome" id="R-HSA-9670613">
    <property type="pathway name" value="Defective Inhibition of DNA Recombination at Telomere Due to DAXX Mutations"/>
</dbReference>
<dbReference type="Reactome" id="R-HSA-9670615">
    <property type="pathway name" value="Defective Inhibition of DNA Recombination at Telomere Due to ATRX Mutations"/>
</dbReference>
<dbReference type="SignaLink" id="P46100"/>
<dbReference type="SIGNOR" id="P46100"/>
<dbReference type="BioGRID-ORCS" id="546">
    <property type="hits" value="53 hits in 823 CRISPR screens"/>
</dbReference>
<dbReference type="CD-CODE" id="91857CE7">
    <property type="entry name" value="Nucleolus"/>
</dbReference>
<dbReference type="CD-CODE" id="B5B9A610">
    <property type="entry name" value="PML body"/>
</dbReference>
<dbReference type="ChiTaRS" id="ATRX">
    <property type="organism name" value="human"/>
</dbReference>
<dbReference type="EvolutionaryTrace" id="P46100"/>
<dbReference type="GeneWiki" id="ATRX"/>
<dbReference type="GenomeRNAi" id="546"/>
<dbReference type="Pharos" id="P46100">
    <property type="development level" value="Tbio"/>
</dbReference>
<dbReference type="PRO" id="PR:P46100"/>
<dbReference type="Proteomes" id="UP000005640">
    <property type="component" value="Chromosome X"/>
</dbReference>
<dbReference type="RNAct" id="P46100">
    <property type="molecule type" value="protein"/>
</dbReference>
<dbReference type="Bgee" id="ENSG00000085224">
    <property type="expression patterns" value="Expressed in endothelial cell and 207 other cell types or tissues"/>
</dbReference>
<dbReference type="ExpressionAtlas" id="P46100">
    <property type="expression patterns" value="baseline and differential"/>
</dbReference>
<dbReference type="GO" id="GO:0099115">
    <property type="term" value="C:chromosome, subtelomeric region"/>
    <property type="evidence" value="ECO:0000314"/>
    <property type="project" value="BHF-UCL"/>
</dbReference>
<dbReference type="GO" id="GO:0000781">
    <property type="term" value="C:chromosome, telomeric region"/>
    <property type="evidence" value="ECO:0000250"/>
    <property type="project" value="UniProtKB"/>
</dbReference>
<dbReference type="GO" id="GO:0000779">
    <property type="term" value="C:condensed chromosome, centromeric region"/>
    <property type="evidence" value="ECO:0007669"/>
    <property type="project" value="Ensembl"/>
</dbReference>
<dbReference type="GO" id="GO:0000792">
    <property type="term" value="C:heterochromatin"/>
    <property type="evidence" value="ECO:0000304"/>
    <property type="project" value="ProtInc"/>
</dbReference>
<dbReference type="GO" id="GO:0016604">
    <property type="term" value="C:nuclear body"/>
    <property type="evidence" value="ECO:0000314"/>
    <property type="project" value="HPA"/>
</dbReference>
<dbReference type="GO" id="GO:0000228">
    <property type="term" value="C:nuclear chromosome"/>
    <property type="evidence" value="ECO:0007669"/>
    <property type="project" value="Ensembl"/>
</dbReference>
<dbReference type="GO" id="GO:0005654">
    <property type="term" value="C:nucleoplasm"/>
    <property type="evidence" value="ECO:0000314"/>
    <property type="project" value="HPA"/>
</dbReference>
<dbReference type="GO" id="GO:0005634">
    <property type="term" value="C:nucleus"/>
    <property type="evidence" value="ECO:0000318"/>
    <property type="project" value="GO_Central"/>
</dbReference>
<dbReference type="GO" id="GO:0005721">
    <property type="term" value="C:pericentric heterochromatin"/>
    <property type="evidence" value="ECO:0000250"/>
    <property type="project" value="BHF-UCL"/>
</dbReference>
<dbReference type="GO" id="GO:0016605">
    <property type="term" value="C:PML body"/>
    <property type="evidence" value="ECO:0000250"/>
    <property type="project" value="BHF-UCL"/>
</dbReference>
<dbReference type="GO" id="GO:0005524">
    <property type="term" value="F:ATP binding"/>
    <property type="evidence" value="ECO:0007669"/>
    <property type="project" value="UniProtKB-KW"/>
</dbReference>
<dbReference type="GO" id="GO:0016887">
    <property type="term" value="F:ATP hydrolysis activity"/>
    <property type="evidence" value="ECO:0007669"/>
    <property type="project" value="RHEA"/>
</dbReference>
<dbReference type="GO" id="GO:0003682">
    <property type="term" value="F:chromatin binding"/>
    <property type="evidence" value="ECO:0000314"/>
    <property type="project" value="UniProtKB"/>
</dbReference>
<dbReference type="GO" id="GO:0031490">
    <property type="term" value="F:chromatin DNA binding"/>
    <property type="evidence" value="ECO:0000318"/>
    <property type="project" value="GO_Central"/>
</dbReference>
<dbReference type="GO" id="GO:0070087">
    <property type="term" value="F:chromo shadow domain binding"/>
    <property type="evidence" value="ECO:0000353"/>
    <property type="project" value="BHF-UCL"/>
</dbReference>
<dbReference type="GO" id="GO:0015616">
    <property type="term" value="F:DNA translocase activity"/>
    <property type="evidence" value="ECO:0000314"/>
    <property type="project" value="UniProtKB"/>
</dbReference>
<dbReference type="GO" id="GO:0004386">
    <property type="term" value="F:helicase activity"/>
    <property type="evidence" value="ECO:0007669"/>
    <property type="project" value="UniProtKB-KW"/>
</dbReference>
<dbReference type="GO" id="GO:0042393">
    <property type="term" value="F:histone binding"/>
    <property type="evidence" value="ECO:0000314"/>
    <property type="project" value="UniProtKB"/>
</dbReference>
<dbReference type="GO" id="GO:0062072">
    <property type="term" value="F:histone H3K9me2/3 reader activity"/>
    <property type="evidence" value="ECO:0000314"/>
    <property type="project" value="UniProtKB"/>
</dbReference>
<dbReference type="GO" id="GO:0035064">
    <property type="term" value="F:methylated histone binding"/>
    <property type="evidence" value="ECO:0000318"/>
    <property type="project" value="GO_Central"/>
</dbReference>
<dbReference type="GO" id="GO:0008270">
    <property type="term" value="F:zinc ion binding"/>
    <property type="evidence" value="ECO:0007669"/>
    <property type="project" value="UniProtKB-KW"/>
</dbReference>
<dbReference type="GO" id="GO:0072711">
    <property type="term" value="P:cellular response to hydroxyurea"/>
    <property type="evidence" value="ECO:0000250"/>
    <property type="project" value="UniProtKB"/>
</dbReference>
<dbReference type="GO" id="GO:0006325">
    <property type="term" value="P:chromatin organization"/>
    <property type="evidence" value="ECO:0000315"/>
    <property type="project" value="UniProtKB"/>
</dbReference>
<dbReference type="GO" id="GO:0006338">
    <property type="term" value="P:chromatin remodeling"/>
    <property type="evidence" value="ECO:0000314"/>
    <property type="project" value="UniProtKB"/>
</dbReference>
<dbReference type="GO" id="GO:0070192">
    <property type="term" value="P:chromosome organization involved in meiotic cell cycle"/>
    <property type="evidence" value="ECO:0007669"/>
    <property type="project" value="Ensembl"/>
</dbReference>
<dbReference type="GO" id="GO:0030330">
    <property type="term" value="P:DNA damage response, signal transduction by p53 class mediator"/>
    <property type="evidence" value="ECO:0000250"/>
    <property type="project" value="UniProtKB"/>
</dbReference>
<dbReference type="GO" id="GO:0006281">
    <property type="term" value="P:DNA repair"/>
    <property type="evidence" value="ECO:0007669"/>
    <property type="project" value="UniProtKB-KW"/>
</dbReference>
<dbReference type="GO" id="GO:0030900">
    <property type="term" value="P:forebrain development"/>
    <property type="evidence" value="ECO:0007669"/>
    <property type="project" value="Ensembl"/>
</dbReference>
<dbReference type="GO" id="GO:0000212">
    <property type="term" value="P:meiotic spindle organization"/>
    <property type="evidence" value="ECO:0007669"/>
    <property type="project" value="Ensembl"/>
</dbReference>
<dbReference type="GO" id="GO:0035264">
    <property type="term" value="P:multicellular organism growth"/>
    <property type="evidence" value="ECO:0007669"/>
    <property type="project" value="Ensembl"/>
</dbReference>
<dbReference type="GO" id="GO:1904908">
    <property type="term" value="P:negative regulation of maintenance of mitotic sister chromatid cohesion, telomeric"/>
    <property type="evidence" value="ECO:0000315"/>
    <property type="project" value="BHF-UCL"/>
</dbReference>
<dbReference type="GO" id="GO:0006334">
    <property type="term" value="P:nucleosome assembly"/>
    <property type="evidence" value="ECO:0000314"/>
    <property type="project" value="UniProtKB"/>
</dbReference>
<dbReference type="GO" id="GO:0010571">
    <property type="term" value="P:positive regulation of nuclear cell cycle DNA replication"/>
    <property type="evidence" value="ECO:0000250"/>
    <property type="project" value="UniProtKB"/>
</dbReference>
<dbReference type="GO" id="GO:0032206">
    <property type="term" value="P:positive regulation of telomere maintenance"/>
    <property type="evidence" value="ECO:0000250"/>
    <property type="project" value="UniProtKB"/>
</dbReference>
<dbReference type="GO" id="GO:0045944">
    <property type="term" value="P:positive regulation of transcription by RNA polymerase II"/>
    <property type="evidence" value="ECO:0000315"/>
    <property type="project" value="UniProtKB"/>
</dbReference>
<dbReference type="GO" id="GO:0035128">
    <property type="term" value="P:post-embryonic forelimb morphogenesis"/>
    <property type="evidence" value="ECO:0007669"/>
    <property type="project" value="Ensembl"/>
</dbReference>
<dbReference type="GO" id="GO:0070198">
    <property type="term" value="P:protein localization to chromosome, telomeric region"/>
    <property type="evidence" value="ECO:0000250"/>
    <property type="project" value="BHF-UCL"/>
</dbReference>
<dbReference type="GO" id="GO:0006355">
    <property type="term" value="P:regulation of DNA-templated transcription"/>
    <property type="evidence" value="ECO:0000304"/>
    <property type="project" value="ProtInc"/>
</dbReference>
<dbReference type="GO" id="GO:0031297">
    <property type="term" value="P:replication fork processing"/>
    <property type="evidence" value="ECO:0000250"/>
    <property type="project" value="UniProtKB"/>
</dbReference>
<dbReference type="GO" id="GO:0072520">
    <property type="term" value="P:seminiferous tubule development"/>
    <property type="evidence" value="ECO:0007669"/>
    <property type="project" value="Ensembl"/>
</dbReference>
<dbReference type="GO" id="GO:0060009">
    <property type="term" value="P:Sertoli cell development"/>
    <property type="evidence" value="ECO:0007669"/>
    <property type="project" value="Ensembl"/>
</dbReference>
<dbReference type="GO" id="GO:0007283">
    <property type="term" value="P:spermatogenesis"/>
    <property type="evidence" value="ECO:0007669"/>
    <property type="project" value="Ensembl"/>
</dbReference>
<dbReference type="GO" id="GO:0031509">
    <property type="term" value="P:subtelomeric heterochromatin formation"/>
    <property type="evidence" value="ECO:0000315"/>
    <property type="project" value="BHF-UCL"/>
</dbReference>
<dbReference type="GO" id="GO:0006366">
    <property type="term" value="P:transcription by RNA polymerase II"/>
    <property type="evidence" value="ECO:0007669"/>
    <property type="project" value="Ensembl"/>
</dbReference>
<dbReference type="CDD" id="cd11726">
    <property type="entry name" value="ADDz_ATRX"/>
    <property type="match status" value="1"/>
</dbReference>
<dbReference type="CDD" id="cd18068">
    <property type="entry name" value="DEXHc_ATRX"/>
    <property type="match status" value="1"/>
</dbReference>
<dbReference type="CDD" id="cd18793">
    <property type="entry name" value="SF2_C_SNF"/>
    <property type="match status" value="1"/>
</dbReference>
<dbReference type="FunFam" id="3.40.50.10810:FF:000011">
    <property type="entry name" value="Transcriptional regulator ATRX homolog"/>
    <property type="match status" value="1"/>
</dbReference>
<dbReference type="FunFam" id="3.30.40.10:FF:000091">
    <property type="entry name" value="transcriptional regulator ATRX isoform X1"/>
    <property type="match status" value="1"/>
</dbReference>
<dbReference type="FunFam" id="3.40.50.300:FF:000377">
    <property type="entry name" value="transcriptional regulator ATRX isoform X1"/>
    <property type="match status" value="1"/>
</dbReference>
<dbReference type="Gene3D" id="3.40.50.300">
    <property type="entry name" value="P-loop containing nucleotide triphosphate hydrolases"/>
    <property type="match status" value="1"/>
</dbReference>
<dbReference type="Gene3D" id="3.40.50.10810">
    <property type="entry name" value="Tandem AAA-ATPase domain"/>
    <property type="match status" value="1"/>
</dbReference>
<dbReference type="Gene3D" id="3.30.40.10">
    <property type="entry name" value="Zinc/RING finger domain, C3HC4 (zinc finger)"/>
    <property type="match status" value="1"/>
</dbReference>
<dbReference type="IDEAL" id="IID00303"/>
<dbReference type="InterPro" id="IPR025766">
    <property type="entry name" value="ADD"/>
</dbReference>
<dbReference type="InterPro" id="IPR041430">
    <property type="entry name" value="ADD_ATRX"/>
</dbReference>
<dbReference type="InterPro" id="IPR052131">
    <property type="entry name" value="ATRX_domain-containing"/>
</dbReference>
<dbReference type="InterPro" id="IPR014001">
    <property type="entry name" value="Helicase_ATP-bd"/>
</dbReference>
<dbReference type="InterPro" id="IPR001650">
    <property type="entry name" value="Helicase_C-like"/>
</dbReference>
<dbReference type="InterPro" id="IPR027417">
    <property type="entry name" value="P-loop_NTPase"/>
</dbReference>
<dbReference type="InterPro" id="IPR038718">
    <property type="entry name" value="SNF2-like_sf"/>
</dbReference>
<dbReference type="InterPro" id="IPR049730">
    <property type="entry name" value="SNF2/RAD54-like_C"/>
</dbReference>
<dbReference type="InterPro" id="IPR000330">
    <property type="entry name" value="SNF2_N"/>
</dbReference>
<dbReference type="InterPro" id="IPR011011">
    <property type="entry name" value="Znf_FYVE_PHD"/>
</dbReference>
<dbReference type="InterPro" id="IPR013083">
    <property type="entry name" value="Znf_RING/FYVE/PHD"/>
</dbReference>
<dbReference type="PANTHER" id="PTHR46357">
    <property type="entry name" value="TRANSCRIPTIONAL REGULATOR ATRX"/>
    <property type="match status" value="1"/>
</dbReference>
<dbReference type="PANTHER" id="PTHR46357:SF1">
    <property type="entry name" value="TRANSCRIPTIONAL REGULATOR ATRX"/>
    <property type="match status" value="1"/>
</dbReference>
<dbReference type="Pfam" id="PF17981">
    <property type="entry name" value="ADD_ATRX"/>
    <property type="match status" value="1"/>
</dbReference>
<dbReference type="Pfam" id="PF00271">
    <property type="entry name" value="Helicase_C"/>
    <property type="match status" value="1"/>
</dbReference>
<dbReference type="Pfam" id="PF00176">
    <property type="entry name" value="SNF2-rel_dom"/>
    <property type="match status" value="1"/>
</dbReference>
<dbReference type="SMART" id="SM00487">
    <property type="entry name" value="DEXDc"/>
    <property type="match status" value="1"/>
</dbReference>
<dbReference type="SMART" id="SM00490">
    <property type="entry name" value="HELICc"/>
    <property type="match status" value="1"/>
</dbReference>
<dbReference type="SUPFAM" id="SSF57903">
    <property type="entry name" value="FYVE/PHD zinc finger"/>
    <property type="match status" value="1"/>
</dbReference>
<dbReference type="SUPFAM" id="SSF52540">
    <property type="entry name" value="P-loop containing nucleoside triphosphate hydrolases"/>
    <property type="match status" value="2"/>
</dbReference>
<dbReference type="PROSITE" id="PS51533">
    <property type="entry name" value="ADD"/>
    <property type="match status" value="1"/>
</dbReference>
<dbReference type="PROSITE" id="PS51192">
    <property type="entry name" value="HELICASE_ATP_BIND_1"/>
    <property type="match status" value="1"/>
</dbReference>
<dbReference type="PROSITE" id="PS51194">
    <property type="entry name" value="HELICASE_CTER"/>
    <property type="match status" value="1"/>
</dbReference>
<protein>
    <recommendedName>
        <fullName>Transcriptional regulator ATRX</fullName>
        <ecNumber>3.6.4.12</ecNumber>
    </recommendedName>
    <alternativeName>
        <fullName>ATP-dependent helicase ATRX</fullName>
    </alternativeName>
    <alternativeName>
        <fullName>X-linked helicase II</fullName>
    </alternativeName>
    <alternativeName>
        <fullName>X-linked nuclear protein</fullName>
        <shortName>XNP</shortName>
    </alternativeName>
    <alternativeName>
        <fullName>Znf-HX</fullName>
    </alternativeName>
</protein>
<keyword id="KW-0002">3D-structure</keyword>
<keyword id="KW-0007">Acetylation</keyword>
<keyword id="KW-0025">Alternative splicing</keyword>
<keyword id="KW-0067">ATP-binding</keyword>
<keyword id="KW-0156">Chromatin regulator</keyword>
<keyword id="KW-0158">Chromosome</keyword>
<keyword id="KW-0225">Disease variant</keyword>
<keyword id="KW-0227">DNA damage</keyword>
<keyword id="KW-0234">DNA repair</keyword>
<keyword id="KW-0238">DNA-binding</keyword>
<keyword id="KW-0347">Helicase</keyword>
<keyword id="KW-0378">Hydrolase</keyword>
<keyword id="KW-0991">Intellectual disability</keyword>
<keyword id="KW-1017">Isopeptide bond</keyword>
<keyword id="KW-0479">Metal-binding</keyword>
<keyword id="KW-0488">Methylation</keyword>
<keyword id="KW-0547">Nucleotide-binding</keyword>
<keyword id="KW-0539">Nucleus</keyword>
<keyword id="KW-0597">Phosphoprotein</keyword>
<keyword id="KW-1267">Proteomics identification</keyword>
<keyword id="KW-1185">Reference proteome</keyword>
<keyword id="KW-0779">Telomere</keyword>
<keyword id="KW-0804">Transcription</keyword>
<keyword id="KW-0805">Transcription regulation</keyword>
<keyword id="KW-0832">Ubl conjugation</keyword>
<keyword id="KW-0862">Zinc</keyword>
<keyword id="KW-0863">Zinc-finger</keyword>
<comment type="function">
    <text evidence="18 19 26 27 28 32 33 34 36">Involved in transcriptional regulation and chromatin remodeling. Facilitates DNA replication in multiple cellular environments and is required for efficient replication of a subset of genomic loci. Binds to DNA tandem repeat sequences in both telomeres and euchromatin and in vitro binds DNA quadruplex structures. May help stabilizing G-rich regions into regular chromatin structures by remodeling G4 DNA and incorporating H3.3-containing nucleosomes. Catalytic component of the chromatin remodeling complex ATRX:DAXX which has ATP-dependent DNA translocase activity and catalyzes the replication-independent deposition of histone H3.3 in pericentric DNA repeats outside S-phase and telomeres, and the in vitro remodeling of H3.3-containing nucleosomes. Its heterochromatin targeting is proposed to involve a combinatorial readout of histone H3 modifications (specifically methylation states of H3K9 and H3K4) and association with CBX5. Involved in maintaining telomere structural integrity in embryonic stem cells which probably implies recruitment of CBX5 to telomeres. Reports on the involvement in transcriptional regulation of telomeric repeat-containing RNA (TERRA) are conflicting; according to a report, it is not sufficient to decrease chromatin condensation at telomeres nor to increase expression of telomeric RNA in fibroblasts (PubMed:24500201). May be involved in telomere maintenance via recombination in ALT (alternative lengthening of telomeres) cell lines. Acts as a negative regulator of chromatin incorporation of transcriptionally repressive histone MACROH2A1, particularily at telomeres and the alpha-globin cluster in erythroleukemic cells. Participates in the allele-specific gene expression at the imprinted IGF2/H19 gene locus. On the maternal allele, required for the chromatin occupancy of SMC1 and CTCTF within the H19 imprinting control region (ICR) and involved in esatblishment of histone tails modifications in the ICR. May be involved in brain development and facial morphogenesis. Binds to zinc-finger coding genes with atypical chromatin signatures and regulates its H3K9me3 levels. Forms a complex with ZNF274, TRIM28 and SETDB1 to facilitate the deposition and maintenance of H3K9me3 at the 3' exons of zinc-finger genes (PubMed:27029610).</text>
</comment>
<comment type="catalytic activity">
    <reaction>
        <text>ATP + H2O = ADP + phosphate + H(+)</text>
        <dbReference type="Rhea" id="RHEA:13065"/>
        <dbReference type="ChEBI" id="CHEBI:15377"/>
        <dbReference type="ChEBI" id="CHEBI:15378"/>
        <dbReference type="ChEBI" id="CHEBI:30616"/>
        <dbReference type="ChEBI" id="CHEBI:43474"/>
        <dbReference type="ChEBI" id="CHEBI:456216"/>
        <dbReference type="EC" id="3.6.4.12"/>
    </reaction>
</comment>
<comment type="subunit">
    <text evidence="12 18 19 21 24 29 30 31 32 35 36 43">Interacts with DAXX to form the chromatin remodeling complex ATRX:DAXX. Probably binds EZH2. Binds annexin V in a calcium and phosphatidylcholine/phosphatidylserine-dependent manner. Interacts directly with CBX5 via the PxVxL motif. Interacts with RAD50, MRE11 and NBN; indicative for an association with the MRN complex. Interacts with histone MACROH2A1. Interacts with histone H3 peptides methylated at 'Lys-10' with preferences H3K9me3 &gt; H3K9me2 &gt; H3K9me1. Interacts with histone H3 peptides unmethylated at 'Lys-5' (H3K4me0). Interacts with MECP2, SMC1 and SMC3. Interacts with SETDB1, TRIM28 and ZNF274 (PubMed:27029610).</text>
</comment>
<comment type="interaction">
    <interactant intactId="EBI-396461">
        <id>P46100</id>
    </interactant>
    <interactant intactId="EBI-78219">
        <id>P45973</id>
        <label>CBX5</label>
    </interactant>
    <organismsDiffer>false</organismsDiffer>
    <experiments>2</experiments>
</comment>
<comment type="interaction">
    <interactant intactId="EBI-396461">
        <id>P46100</id>
    </interactant>
    <interactant intactId="EBI-77321">
        <id>Q9UER7</id>
        <label>DAXX</label>
    </interactant>
    <organismsDiffer>false</organismsDiffer>
    <experiments>11</experiments>
</comment>
<comment type="interaction">
    <interactant intactId="EBI-396461">
        <id>P46100</id>
    </interactant>
    <interactant intactId="EBI-530054">
        <id>Q15910</id>
        <label>EZH2</label>
    </interactant>
    <organismsDiffer>false</organismsDiffer>
    <experiments>2</experiments>
</comment>
<comment type="interaction">
    <interactant intactId="EBI-396461">
        <id>P46100</id>
    </interactant>
    <interactant intactId="EBI-6249599">
        <id>O75367-2</id>
        <label>MACROH2A1</label>
    </interactant>
    <organismsDiffer>false</organismsDiffer>
    <experiments>2</experiments>
</comment>
<comment type="interaction">
    <interactant intactId="EBI-396461">
        <id>P46100</id>
    </interactant>
    <interactant intactId="EBI-495494">
        <id>Q92878</id>
        <label>RAD50</label>
    </interactant>
    <organismsDiffer>false</organismsDiffer>
    <experiments>5</experiments>
</comment>
<comment type="interaction">
    <interactant intactId="EBI-396461">
        <id>P46100</id>
    </interactant>
    <interactant intactId="EBI-9396907">
        <id>Q00566</id>
        <label>Mecp2</label>
    </interactant>
    <organismsDiffer>true</organismsDiffer>
    <experiments>5</experiments>
</comment>
<comment type="subcellular location">
    <subcellularLocation>
        <location>Nucleus</location>
    </subcellularLocation>
    <subcellularLocation>
        <location>Chromosome</location>
        <location>Telomere</location>
    </subcellularLocation>
    <subcellularLocation>
        <location>Nucleus</location>
        <location>PML body</location>
    </subcellularLocation>
    <text evidence="1">Associated with pericentromeric heterochromatin during interphase and mitosis, probably by interacting with CBX5/HP1 alpha. Colocalizes with histone H3.3, DAXX, HIRA and ASF1A at PML-nuclear bodies. Colocalizes with cohesin (SMC1 and SMC3) and MECP2 at the maternal H19 ICR (By similarity).</text>
</comment>
<comment type="alternative products">
    <event type="alternative splicing"/>
    <isoform>
        <id>P46100-1</id>
        <name>4</name>
        <sequence type="displayed"/>
    </isoform>
    <isoform>
        <id>P46100-2</id>
        <name>1</name>
        <sequence type="described" ref="VSP_000575"/>
    </isoform>
    <isoform>
        <id>P46100-3</id>
        <name>2</name>
        <sequence type="described" ref="VSP_000574"/>
    </isoform>
    <isoform>
        <id>P46100-4</id>
        <name>3</name>
        <sequence type="described" ref="VSP_000576"/>
    </isoform>
    <isoform>
        <id>P46100-5</id>
        <name>5</name>
        <sequence type="described" ref="VSP_000574 VSP_000576"/>
    </isoform>
    <isoform>
        <id>P46100-6</id>
        <name>6</name>
        <sequence type="described" ref="VSP_015499 VSP_015500 VSP_015501"/>
    </isoform>
</comment>
<comment type="tissue specificity">
    <text>Ubiquitous.</text>
</comment>
<comment type="domain">
    <text evidence="25">The ADD domain predominantly interacts with histone H3 trimethylated at 'Lys-10'(H3K9me3) (and to a lesser extent H3 mono- or dimethylated at 'Lys-10') and simultaneously to histone H3 unmethylated at 'Lys-5' (H3K4me0). The interaction with H3K9me3 is disrupted by the presence of H3K4me3 suggesting a readout of the combined histone H3 methylation state.</text>
</comment>
<comment type="domain">
    <text evidence="25">Contains one Pro-Xaa-Val-Xaa-Leu (PxVxL) motif, which is required for interaction with chromoshadow domains. This motif requires additional residues -7, -6, +4 and +5 of the central Val which contact the chromoshadow domain.</text>
</comment>
<comment type="PTM">
    <text evidence="12">Phosphorylated at serine residues during mitose. Phosphorylation may promote the release from the nuclear matrix and progression to mitosis.</text>
</comment>
<comment type="disease" evidence="8 10 11 14 16 19 23 29 37 39 40 42">
    <disease id="DI-02428">
        <name>Alpha-thalassemia/impaired intellectual development syndrome, X-linked</name>
        <acronym>ATRX</acronym>
        <description>A disorder characterized by severe psychomotor retardation, facial dysmorphism, urogenital abnormalities, and alpha-thalassemia. An essential phenotypic trait are hemoglobin H erythrocyte inclusions.</description>
        <dbReference type="MIM" id="301040"/>
    </disease>
    <text>The disease is caused by variants affecting the gene represented in this entry.</text>
</comment>
<comment type="disease" evidence="9 13 15 20 22 38">
    <disease id="DI-00723">
        <name>Intellectual disability-hypotonic facies syndrome, X-linked, 1</name>
        <acronym>MRXHF1</acronym>
        <description>A disorder characterized by significantly below average general intellectual functioning associated with impairments in adaptive behavior and manifested during the developmental period. MRXSHF1 features include severe intellectual disability, dysmorphic facies, and a highly skewed X-inactivation pattern in carrier women. Other more variable features include hypogonadism, deafness, renal anomalies, and mild skeletal defects.</description>
        <dbReference type="MIM" id="309580"/>
    </disease>
    <text>The disease is caused by variants affecting the gene represented in this entry.</text>
</comment>
<comment type="disease" evidence="17">
    <disease id="DI-01180">
        <name>Alpha-thalassemia myelodysplasia syndrome</name>
        <acronym>ATMDS</acronym>
        <description>A disorder characterized by hypochromic, microcytic red blood cells, hemoglobin H detected in peripheral blood, and multilineage myelodysplasia.</description>
        <dbReference type="MIM" id="300448"/>
    </disease>
    <text>The disease is caused by variants affecting the gene represented in this entry.</text>
</comment>
<comment type="similarity">
    <text evidence="47">Belongs to the SNF2/RAD54 helicase family.</text>
</comment>
<comment type="sequence caution" evidence="47">
    <conflict type="miscellaneous discrepancy">
        <sequence resource="EMBL-CDS" id="AAA20872"/>
    </conflict>
    <text>Many frameshifts and conflits.</text>
</comment>
<comment type="sequence caution" evidence="47">
    <conflict type="frameshift">
        <sequence resource="EMBL-CDS" id="AAC50069"/>
    </conflict>
</comment>
<comment type="sequence caution" evidence="47">
    <conflict type="erroneous initiation">
        <sequence resource="EMBL-CDS" id="BAD92165"/>
    </conflict>
    <text>Extended N-terminus.</text>
</comment>
<accession>P46100</accession>
<accession>D3DTE2</accession>
<accession>P51068</accession>
<accession>Q15886</accession>
<accession>Q59FB5</accession>
<accession>Q59H31</accession>
<accession>Q5H9A2</accession>
<accession>Q5JWI4</accession>
<accession>Q7Z2J1</accession>
<accession>Q9H0Z1</accession>
<accession>Q9NTS3</accession>
<feature type="chain" id="PRO_0000074301" description="Transcriptional regulator ATRX">
    <location>
        <begin position="1"/>
        <end position="2492"/>
    </location>
</feature>
<feature type="domain" description="ADD" evidence="6">
    <location>
        <begin position="159"/>
        <end position="296"/>
    </location>
</feature>
<feature type="domain" description="Helicase ATP-binding" evidence="4">
    <location>
        <begin position="1581"/>
        <end position="1768"/>
    </location>
</feature>
<feature type="domain" description="Helicase C-terminal" evidence="5">
    <location>
        <begin position="2025"/>
        <end position="2205"/>
    </location>
</feature>
<feature type="zinc finger region" description="GATA-type; atypical" evidence="6">
    <location>
        <begin position="170"/>
        <end position="206"/>
    </location>
</feature>
<feature type="zinc finger region" description="PHD-type; atypical" evidence="6">
    <location>
        <begin position="217"/>
        <end position="272"/>
    </location>
</feature>
<feature type="region of interest" description="Disordered" evidence="7">
    <location>
        <begin position="1"/>
        <end position="147"/>
    </location>
</feature>
<feature type="region of interest" description="Disordered" evidence="7">
    <location>
        <begin position="445"/>
        <end position="516"/>
    </location>
</feature>
<feature type="region of interest" description="Disordered" evidence="7">
    <location>
        <begin position="535"/>
        <end position="576"/>
    </location>
</feature>
<feature type="region of interest" description="Disordered" evidence="7">
    <location>
        <begin position="593"/>
        <end position="616"/>
    </location>
</feature>
<feature type="region of interest" description="Disordered" evidence="7">
    <location>
        <begin position="649"/>
        <end position="956"/>
    </location>
</feature>
<feature type="region of interest" description="Disordered" evidence="7">
    <location>
        <begin position="968"/>
        <end position="1479"/>
    </location>
</feature>
<feature type="region of interest" description="Interaction with DAXX">
    <location>
        <begin position="1189"/>
        <end position="1326"/>
    </location>
</feature>
<feature type="region of interest" description="Disordered" evidence="7">
    <location>
        <begin position="1913"/>
        <end position="2000"/>
    </location>
</feature>
<feature type="region of interest" description="Interaction with MECP2" evidence="24">
    <location>
        <begin position="2010"/>
        <end position="2280"/>
    </location>
</feature>
<feature type="region of interest" description="Disordered" evidence="7">
    <location>
        <begin position="2462"/>
        <end position="2492"/>
    </location>
</feature>
<feature type="short sequence motif" description="PxVxL motif">
    <location>
        <begin position="581"/>
        <end position="594"/>
    </location>
</feature>
<feature type="short sequence motif" description="DEGH box">
    <location>
        <begin position="1719"/>
        <end position="1722"/>
    </location>
</feature>
<feature type="compositionally biased region" description="Basic and acidic residues" evidence="7">
    <location>
        <begin position="17"/>
        <end position="27"/>
    </location>
</feature>
<feature type="compositionally biased region" description="Polar residues" evidence="7">
    <location>
        <begin position="40"/>
        <end position="57"/>
    </location>
</feature>
<feature type="compositionally biased region" description="Basic and acidic residues" evidence="7">
    <location>
        <begin position="58"/>
        <end position="72"/>
    </location>
</feature>
<feature type="compositionally biased region" description="Acidic residues" evidence="7">
    <location>
        <begin position="92"/>
        <end position="108"/>
    </location>
</feature>
<feature type="compositionally biased region" description="Basic and acidic residues" evidence="7">
    <location>
        <begin position="135"/>
        <end position="147"/>
    </location>
</feature>
<feature type="compositionally biased region" description="Basic and acidic residues" evidence="7">
    <location>
        <begin position="445"/>
        <end position="502"/>
    </location>
</feature>
<feature type="compositionally biased region" description="Polar residues" evidence="7">
    <location>
        <begin position="550"/>
        <end position="567"/>
    </location>
</feature>
<feature type="compositionally biased region" description="Basic and acidic residues" evidence="7">
    <location>
        <begin position="755"/>
        <end position="777"/>
    </location>
</feature>
<feature type="compositionally biased region" description="Basic and acidic residues" evidence="7">
    <location>
        <begin position="843"/>
        <end position="864"/>
    </location>
</feature>
<feature type="compositionally biased region" description="Basic and acidic residues" evidence="7">
    <location>
        <begin position="878"/>
        <end position="887"/>
    </location>
</feature>
<feature type="compositionally biased region" description="Basic and acidic residues" evidence="7">
    <location>
        <begin position="894"/>
        <end position="909"/>
    </location>
</feature>
<feature type="compositionally biased region" description="Basic and acidic residues" evidence="7">
    <location>
        <begin position="920"/>
        <end position="944"/>
    </location>
</feature>
<feature type="compositionally biased region" description="Basic residues" evidence="7">
    <location>
        <begin position="945"/>
        <end position="955"/>
    </location>
</feature>
<feature type="compositionally biased region" description="Basic and acidic residues" evidence="7">
    <location>
        <begin position="968"/>
        <end position="1004"/>
    </location>
</feature>
<feature type="compositionally biased region" description="Basic and acidic residues" evidence="7">
    <location>
        <begin position="1015"/>
        <end position="1027"/>
    </location>
</feature>
<feature type="compositionally biased region" description="Basic residues" evidence="7">
    <location>
        <begin position="1045"/>
        <end position="1055"/>
    </location>
</feature>
<feature type="compositionally biased region" description="Basic and acidic residues" evidence="7">
    <location>
        <begin position="1056"/>
        <end position="1082"/>
    </location>
</feature>
<feature type="compositionally biased region" description="Basic residues" evidence="7">
    <location>
        <begin position="1090"/>
        <end position="1102"/>
    </location>
</feature>
<feature type="compositionally biased region" description="Basic and acidic residues" evidence="7">
    <location>
        <begin position="1103"/>
        <end position="1139"/>
    </location>
</feature>
<feature type="compositionally biased region" description="Basic residues" evidence="7">
    <location>
        <begin position="1167"/>
        <end position="1195"/>
    </location>
</feature>
<feature type="compositionally biased region" description="Polar residues" evidence="7">
    <location>
        <begin position="1233"/>
        <end position="1246"/>
    </location>
</feature>
<feature type="compositionally biased region" description="Basic and acidic residues" evidence="7">
    <location>
        <begin position="1267"/>
        <end position="1281"/>
    </location>
</feature>
<feature type="compositionally biased region" description="Acidic residues" evidence="7">
    <location>
        <begin position="1286"/>
        <end position="1297"/>
    </location>
</feature>
<feature type="compositionally biased region" description="Basic and acidic residues" evidence="7">
    <location>
        <begin position="1298"/>
        <end position="1308"/>
    </location>
</feature>
<feature type="compositionally biased region" description="Basic residues" evidence="7">
    <location>
        <begin position="1334"/>
        <end position="1345"/>
    </location>
</feature>
<feature type="compositionally biased region" description="Basic and acidic residues" evidence="7">
    <location>
        <begin position="1353"/>
        <end position="1368"/>
    </location>
</feature>
<feature type="compositionally biased region" description="Basic and acidic residues" evidence="7">
    <location>
        <begin position="1408"/>
        <end position="1417"/>
    </location>
</feature>
<feature type="compositionally biased region" description="Basic residues" evidence="7">
    <location>
        <begin position="1419"/>
        <end position="1428"/>
    </location>
</feature>
<feature type="compositionally biased region" description="Acidic residues" evidence="7">
    <location>
        <begin position="1443"/>
        <end position="1468"/>
    </location>
</feature>
<feature type="compositionally biased region" description="Basic residues" evidence="7">
    <location>
        <begin position="1929"/>
        <end position="1938"/>
    </location>
</feature>
<feature type="compositionally biased region" description="Low complexity" evidence="7">
    <location>
        <begin position="1990"/>
        <end position="1999"/>
    </location>
</feature>
<feature type="compositionally biased region" description="Pro residues" evidence="7">
    <location>
        <begin position="2468"/>
        <end position="2479"/>
    </location>
</feature>
<feature type="binding site" evidence="4">
    <location>
        <begin position="1594"/>
        <end position="1601"/>
    </location>
    <ligand>
        <name>ATP</name>
        <dbReference type="ChEBI" id="CHEBI:30616"/>
    </ligand>
</feature>
<feature type="modified residue" description="Phosphoserine" evidence="54">
    <location>
        <position position="25"/>
    </location>
</feature>
<feature type="modified residue" description="Phosphoserine" evidence="51 54">
    <location>
        <position position="34"/>
    </location>
</feature>
<feature type="modified residue" description="Phosphotyrosine" evidence="51">
    <location>
        <position position="89"/>
    </location>
</feature>
<feature type="modified residue" description="Phosphoserine" evidence="52 55">
    <location>
        <position position="92"/>
    </location>
</feature>
<feature type="modified residue" description="Phosphoserine" evidence="51">
    <location>
        <position position="112"/>
    </location>
</feature>
<feature type="modified residue" description="Phosphoserine" evidence="3">
    <location>
        <position position="213"/>
    </location>
</feature>
<feature type="modified residue" description="Phosphoserine" evidence="54">
    <location>
        <position position="316"/>
    </location>
</feature>
<feature type="modified residue" description="Phosphothreonine" evidence="52">
    <location>
        <position position="591"/>
    </location>
</feature>
<feature type="modified residue" description="Phosphoserine" evidence="49">
    <location>
        <position position="594"/>
    </location>
</feature>
<feature type="modified residue" description="Phosphoserine" evidence="52 53 55">
    <location>
        <position position="598"/>
    </location>
</feature>
<feature type="modified residue" description="Phosphoserine" evidence="48">
    <location>
        <position position="634"/>
    </location>
</feature>
<feature type="modified residue" description="Phosphothreonine" evidence="49">
    <location>
        <position position="674"/>
    </location>
</feature>
<feature type="modified residue" description="Phosphoserine" evidence="49 55">
    <location>
        <position position="675"/>
    </location>
</feature>
<feature type="modified residue" description="Phosphoserine" evidence="49 54">
    <location>
        <position position="677"/>
    </location>
</feature>
<feature type="modified residue" description="Phosphoserine" evidence="49 54">
    <location>
        <position position="729"/>
    </location>
</feature>
<feature type="modified residue" description="Phosphoserine" evidence="49 54">
    <location>
        <position position="731"/>
    </location>
</feature>
<feature type="modified residue" description="Phosphoserine" evidence="3">
    <location>
        <position position="784"/>
    </location>
</feature>
<feature type="modified residue" description="Phosphoserine" evidence="54">
    <location>
        <position position="819"/>
    </location>
</feature>
<feature type="modified residue" description="Phosphoserine" evidence="54">
    <location>
        <position position="849"/>
    </location>
</feature>
<feature type="modified residue" description="Phosphoserine" evidence="54">
    <location>
        <position position="850"/>
    </location>
</feature>
<feature type="modified residue" description="Phosphoserine" evidence="49">
    <location>
        <position position="875"/>
    </location>
</feature>
<feature type="modified residue" description="Phosphoserine" evidence="49">
    <location>
        <position position="876"/>
    </location>
</feature>
<feature type="modified residue" description="Phosphoserine" evidence="53 54">
    <location>
        <position position="889"/>
    </location>
</feature>
<feature type="modified residue" description="Phosphoserine" evidence="54">
    <location>
        <position position="962"/>
    </location>
</feature>
<feature type="modified residue" description="N6-acetyllysine" evidence="50">
    <location>
        <position position="967"/>
    </location>
</feature>
<feature type="modified residue" description="Phosphoserine" evidence="55">
    <location>
        <position position="974"/>
    </location>
</feature>
<feature type="modified residue" description="Phosphothreonine" evidence="55">
    <location>
        <position position="977"/>
    </location>
</feature>
<feature type="modified residue" description="Phosphoserine" evidence="2">
    <location>
        <position position="1011"/>
    </location>
</feature>
<feature type="modified residue" description="Phosphoserine" evidence="2">
    <location>
        <position position="1012"/>
    </location>
</feature>
<feature type="modified residue" description="Phosphoserine" evidence="2">
    <location>
        <position position="1013"/>
    </location>
</feature>
<feature type="modified residue" description="Phosphoserine" evidence="52 53 54">
    <location>
        <position position="1061"/>
    </location>
</feature>
<feature type="modified residue" description="Phosphotyrosine" evidence="52">
    <location>
        <position position="1063"/>
    </location>
</feature>
<feature type="modified residue" description="Phosphoserine" evidence="3">
    <location>
        <position position="1244"/>
    </location>
</feature>
<feature type="modified residue" description="Phosphoserine" evidence="3">
    <location>
        <position position="1245"/>
    </location>
</feature>
<feature type="modified residue" description="Phosphoserine" evidence="3">
    <location>
        <position position="1253"/>
    </location>
</feature>
<feature type="modified residue" description="Phosphoserine" evidence="53">
    <location>
        <position position="1322"/>
    </location>
</feature>
<feature type="modified residue" description="Phosphoserine" evidence="53">
    <location>
        <position position="1324"/>
    </location>
</feature>
<feature type="modified residue" description="Phosphoserine" evidence="53">
    <location>
        <position position="1326"/>
    </location>
</feature>
<feature type="modified residue" description="Phosphoserine" evidence="49 52 53 54">
    <location>
        <position position="1348"/>
    </location>
</feature>
<feature type="modified residue" description="Phosphoserine" evidence="48 49 52 53 54">
    <location>
        <position position="1352"/>
    </location>
</feature>
<feature type="modified residue" description="Phosphoserine" evidence="52 54">
    <location>
        <position position="1527"/>
    </location>
</feature>
<feature type="modified residue" description="Phosphothreonine" evidence="54">
    <location>
        <position position="1529"/>
    </location>
</feature>
<feature type="modified residue" description="Phosphoserine" evidence="3">
    <location>
        <position position="1906"/>
    </location>
</feature>
<feature type="modified residue" description="Phosphoserine" evidence="3">
    <location>
        <position position="1913"/>
    </location>
</feature>
<feature type="modified residue" description="Phosphoserine" evidence="52">
    <location>
        <position position="1992"/>
    </location>
</feature>
<feature type="modified residue" description="Phosphoserine" evidence="49 51 52">
    <location>
        <position position="1996"/>
    </location>
</feature>
<feature type="modified residue" description="Phosphoserine" evidence="49 52">
    <location>
        <position position="2220"/>
    </location>
</feature>
<feature type="modified residue" description="Omega-N-methylarginine" evidence="3">
    <location>
        <position position="2474"/>
    </location>
</feature>
<feature type="modified residue" description="Omega-N-methylarginine" evidence="3">
    <location>
        <position position="2480"/>
    </location>
</feature>
<feature type="cross-link" description="Glycyl lysine isopeptide (Lys-Gly) (interchain with G-Cter in SUMO2)" evidence="59">
    <location>
        <position position="10"/>
    </location>
</feature>
<feature type="cross-link" description="Glycyl lysine isopeptide (Lys-Gly) (interchain with G-Cter in SUMO2)" evidence="59">
    <location>
        <position position="138"/>
    </location>
</feature>
<feature type="cross-link" description="Glycyl lysine isopeptide (Lys-Gly) (interchain with G-Cter in SUMO2)" evidence="59">
    <location>
        <position position="142"/>
    </location>
</feature>
<feature type="cross-link" description="Glycyl lysine isopeptide (Lys-Gly) (interchain with G-Cter in SUMO2)" evidence="57">
    <location>
        <position position="299"/>
    </location>
</feature>
<feature type="cross-link" description="Glycyl lysine isopeptide (Lys-Gly) (interchain with G-Cter in SUMO2)" evidence="57 59">
    <location>
        <position position="438"/>
    </location>
</feature>
<feature type="cross-link" description="Glycyl lysine isopeptide (Lys-Gly) (interchain with G-Cter in SUMO1); alternate" evidence="56">
    <location>
        <position position="623"/>
    </location>
</feature>
<feature type="cross-link" description="Glycyl lysine isopeptide (Lys-Gly) (interchain with G-Cter in SUMO2); alternate" evidence="56 59">
    <location>
        <position position="623"/>
    </location>
</feature>
<feature type="cross-link" description="Glycyl lysine isopeptide (Lys-Gly) (interchain with G-Cter in SUMO2)" evidence="57 58 59">
    <location>
        <position position="1004"/>
    </location>
</feature>
<feature type="cross-link" description="Glycyl lysine isopeptide (Lys-Gly) (interchain with G-Cter in SUMO2)" evidence="57 59">
    <location>
        <position position="1488"/>
    </location>
</feature>
<feature type="cross-link" description="Glycyl lysine isopeptide (Lys-Gly) (interchain with G-Cter in SUMO1); alternate" evidence="56">
    <location>
        <position position="1982"/>
    </location>
</feature>
<feature type="cross-link" description="Glycyl lysine isopeptide (Lys-Gly) (interchain with G-Cter in SUMO2); alternate" evidence="57 58 59">
    <location>
        <position position="1982"/>
    </location>
</feature>
<feature type="cross-link" description="Glycyl lysine isopeptide (Lys-Gly) (interchain with G-Cter in SUMO2)" evidence="59">
    <location>
        <position position="1987"/>
    </location>
</feature>
<feature type="splice variant" id="VSP_000575" description="In isoform 1." evidence="44">
    <location>
        <begin position="1"/>
        <end position="204"/>
    </location>
</feature>
<feature type="splice variant" id="VSP_000574" description="In isoform 2 and isoform 5." evidence="44 45">
    <location>
        <begin position="1"/>
        <end position="117"/>
    </location>
</feature>
<feature type="splice variant" id="VSP_015499" description="In isoform 6." evidence="46">
    <location>
        <begin position="124"/>
        <end position="162"/>
    </location>
</feature>
<feature type="splice variant" id="VSP_000576" description="In isoform 3 and isoform 5." evidence="44">
    <location>
        <begin position="124"/>
        <end position="161"/>
    </location>
</feature>
<feature type="splice variant" id="VSP_015500" description="In isoform 6." evidence="46">
    <location>
        <begin position="573"/>
        <end position="601"/>
    </location>
</feature>
<feature type="splice variant" id="VSP_015501" description="In isoform 6." evidence="46">
    <location>
        <begin position="1419"/>
        <end position="2492"/>
    </location>
</feature>
<feature type="sequence variant" id="VAR_012113" description="In ATRX." evidence="8">
    <original>G</original>
    <variation>E</variation>
    <location>
        <position position="175"/>
    </location>
</feature>
<feature type="sequence variant" id="VAR_012114" description="In ATRX." evidence="8">
    <location>
        <begin position="178"/>
        <end position="198"/>
    </location>
</feature>
<feature type="sequence variant" id="VAR_012115" description="In ATRX; dbSNP:rs398123425." evidence="14">
    <original>N</original>
    <variation>S</variation>
    <location>
        <position position="179"/>
    </location>
</feature>
<feature type="sequence variant" id="VAR_001226" description="In ATRX; impairs interaction with histone H3 peptides and reduces localization to pericentromeric heterochromatin foci; dbSNP:rs122445103." evidence="31 42">
    <original>P</original>
    <variation>A</variation>
    <location>
        <position position="190"/>
    </location>
</feature>
<feature type="sequence variant" id="VAR_012116" description="In ATRX; dbSNP:rs1057518708." evidence="14">
    <original>P</original>
    <variation>L</variation>
    <location>
        <position position="190"/>
    </location>
</feature>
<feature type="sequence variant" id="VAR_012117" description="In ATRX; dbSNP:rs122445103." evidence="8">
    <original>P</original>
    <variation>S</variation>
    <location>
        <position position="190"/>
    </location>
</feature>
<feature type="sequence variant" id="VAR_001227" description="In ATRX; dbSNP:rs2148656275." evidence="42">
    <original>L</original>
    <variation>F</variation>
    <location>
        <position position="192"/>
    </location>
</feature>
<feature type="sequence variant" id="VAR_012118" description="In ATRX." evidence="14">
    <original>V</original>
    <variation>I</variation>
    <location>
        <position position="194"/>
    </location>
</feature>
<feature type="sequence variant" id="VAR_001228" description="In ATRX." evidence="42">
    <original>C</original>
    <variation>S</variation>
    <location>
        <position position="200"/>
    </location>
</feature>
<feature type="sequence variant" id="VAR_012119" description="In ATRX; greatly impairs interaction with histone H3 peptides trimethylated at 'Lys-10' (H3K9me3) and reduces localization to pericentromeric heterochromatin foci." evidence="8 30 31">
    <original>Q</original>
    <variation>P</variation>
    <location>
        <position position="219"/>
    </location>
</feature>
<feature type="sequence variant" id="VAR_001229" description="In ATRX." evidence="42">
    <original>C</original>
    <variation>R</variation>
    <location>
        <position position="220"/>
    </location>
</feature>
<feature type="sequence variant" id="VAR_032625" description="In MRXHF1; dbSNP:rs122445111." evidence="15">
    <original>C</original>
    <variation>Y</variation>
    <location>
        <position position="220"/>
    </location>
</feature>
<feature type="sequence variant" id="VAR_001230" description="In ATRX; dbSNP:rs2148640532." evidence="42">
    <original>W</original>
    <variation>S</variation>
    <location>
        <position position="222"/>
    </location>
</feature>
<feature type="sequence variant" id="VAR_001231" description="In ATRX." evidence="42">
    <original>C</original>
    <variation>F</variation>
    <location>
        <position position="243"/>
    </location>
</feature>
<feature type="sequence variant" id="VAR_001232" description="In ATRX; impairs interaction with histone H3 peptides trimethylated at 'Lys-10' (H3K9me3) and reduces localization to pericentromeric heterochromatin foci; dbSNP:rs122445105." evidence="14 23 29 31 42">
    <original>R</original>
    <variation>C</variation>
    <location>
        <position position="246"/>
    </location>
</feature>
<feature type="sequence variant" id="VAR_010914" description="In ATRX; impairs interaction with histone H3 peptides trimethylated at 'Lys-10' (H3K9me3); dbSNP:rs1603226766." evidence="8 11 29">
    <original>R</original>
    <variation>L</variation>
    <location>
        <position position="246"/>
    </location>
</feature>
<feature type="sequence variant" id="VAR_012120" description="In ATRX; dbSNP:rs2148638894." evidence="8">
    <original>G</original>
    <variation>C</variation>
    <location>
        <position position="249"/>
    </location>
</feature>
<feature type="sequence variant" id="VAR_001233" description="In ATRX; impairs interaction with histone H3 peptides trimethylated at 'Lys-10' (H3K9me3); loss of heterochromatic localization; dbSNP:rs2148638863." evidence="29 42">
    <original>G</original>
    <variation>D</variation>
    <location>
        <position position="249"/>
    </location>
</feature>
<feature type="sequence variant" id="VAR_032626" description="In MRXHF1; dbSNP:rs122445109." evidence="20">
    <original>L</original>
    <variation>S</variation>
    <location>
        <position position="409"/>
    </location>
</feature>
<feature type="sequence variant" id="VAR_055939" description="In dbSNP:rs35738915.">
    <original>Q</original>
    <variation>E</variation>
    <location>
        <position position="545"/>
    </location>
</feature>
<feature type="sequence variant" id="VAR_016914" description="In dbSNP:rs1051678." evidence="41">
    <original>S</original>
    <variation>P</variation>
    <location>
        <position position="596"/>
    </location>
</feature>
<feature type="sequence variant" id="VAR_016915" description="In dbSNP:rs1051680." evidence="41">
    <original>E</original>
    <variation>G</variation>
    <location>
        <position position="740"/>
    </location>
</feature>
<feature type="sequence variant" id="VAR_023438" description="In dbSNP:rs3088074.">
    <original>E</original>
    <variation>Q</variation>
    <location>
        <position position="929"/>
    </location>
</feature>
<feature type="sequence variant" id="VAR_012121" description="In ATRX; uncertain significance; dbSNP:rs2148359561." evidence="39">
    <original>V</original>
    <variation>G</variation>
    <location>
        <position position="1538"/>
    </location>
</feature>
<feature type="sequence variant" id="VAR_012122" description="In ATRX; dbSNP:rs1602995714." evidence="14">
    <original>V</original>
    <variation>F</variation>
    <location>
        <position position="1552"/>
    </location>
</feature>
<feature type="sequence variant" id="VAR_001234" description="In ATRX; dbSNP:rs122445093." evidence="37 39">
    <original>H</original>
    <variation>R</variation>
    <location>
        <position position="1609"/>
    </location>
</feature>
<feature type="sequence variant" id="VAR_001235" description="In ATRX; dbSNP:rs122445094." evidence="37 39">
    <original>C</original>
    <variation>R</variation>
    <location>
        <position position="1614"/>
    </location>
</feature>
<feature type="sequence variant" id="VAR_016916" description="In ATRX; dbSNP:rs122445106." evidence="16">
    <original>T</original>
    <variation>M</variation>
    <location>
        <position position="1621"/>
    </location>
</feature>
<feature type="sequence variant" id="VAR_012123" description="In ATRX." evidence="14">
    <original>L</original>
    <variation>S</variation>
    <location>
        <position position="1645"/>
    </location>
</feature>
<feature type="sequence variant" id="VAR_001236" description="In ATRX; dbSNP:rs122445095." evidence="37 39">
    <original>K</original>
    <variation>N</variation>
    <location>
        <position position="1650"/>
    </location>
</feature>
<feature type="sequence variant" id="VAR_012124" description="In ATRX; without alpha-thalassemia; dbSNP:rs2148272498." evidence="40">
    <original>P</original>
    <variation>S</variation>
    <location>
        <position position="1713"/>
    </location>
</feature>
<feature type="sequence variant" id="VAR_012125" description="In ATRX; atypical; patients presents spastic paraplegia at birth; dbSNP:rs122445104." evidence="10">
    <original>R</original>
    <variation>K</variation>
    <location>
        <position position="1742"/>
    </location>
</feature>
<feature type="sequence variant" id="VAR_012126" description="In ATRX; dbSNP:rs1057521987." evidence="14">
    <original>Y</original>
    <variation>C</variation>
    <location>
        <position position="1847"/>
    </location>
</feature>
<feature type="sequence variant" id="VAR_001237" description="In ATRX; dbSNP:rs45439799." evidence="37 39">
    <original>N</original>
    <variation>S</variation>
    <location>
        <position position="1860"/>
    </location>
</feature>
<feature type="sequence variant" id="VAR_001238" description="In ATRX; impairs ATPase activity; dbSNP:rs122445096." evidence="19 37 39">
    <original>D</original>
    <variation>V</variation>
    <location>
        <position position="2035"/>
    </location>
</feature>
<feature type="sequence variant" id="VAR_012127" description="In MRXHF1; originally reported as Carpenter-Waziri syndrome; dbSNP:rs122445110." evidence="9">
    <original>I</original>
    <variation>T</variation>
    <location>
        <position position="2050"/>
    </location>
</feature>
<feature type="sequence variant" id="VAR_001239" description="In ATRX; impairs ATPase activity; dbSNP:rs122445097." evidence="19 37 39">
    <original>Y</original>
    <variation>H</variation>
    <location>
        <position position="2084"/>
    </location>
</feature>
<feature type="sequence variant" id="VAR_001240" description="In MRXHF1 and ATRX; originally reported as Juberg-Marsidi syndrome; dbSNP:rs122445101." evidence="38 39">
    <original>R</original>
    <variation>Q</variation>
    <location>
        <position position="2131"/>
    </location>
</feature>
<feature type="sequence variant" id="VAR_001241" description="In ATRX; dbSNP:rs122445098." evidence="37 39">
    <original>Y</original>
    <variation>C</variation>
    <location>
        <position position="2163"/>
    </location>
</feature>
<feature type="sequence variant" id="VAR_032627" description="In MRXHF1; dbSNP:rs122445112." evidence="22">
    <original>R</original>
    <variation>G</variation>
    <location>
        <position position="2271"/>
    </location>
</feature>
<feature type="mutagenesis site" description="Impairs interaction with histone H3 peptides and reduces localization to pericentromeric heterochromatin foci." evidence="31">
    <original>H</original>
    <variation>N</variation>
    <location>
        <position position="189"/>
    </location>
</feature>
<feature type="mutagenesis site" description="Impairs interaction with histone H3 peptides trimethylated at 'Lys-10' (H3K9me3); loss of heterochromatic localization." evidence="29 30 31">
    <original>Y</original>
    <variation>A</variation>
    <variation>K</variation>
    <location>
        <position position="203"/>
    </location>
</feature>
<feature type="mutagenesis site" description="Impairs interaction with histone H3 peptides trimethylated at 'Lys-10' (H3K9me3) and reduces localization to pericentromeric heterochromatin foci." evidence="29 31">
    <original>Y</original>
    <variation>A</variation>
    <location>
        <position position="204"/>
    </location>
</feature>
<feature type="mutagenesis site" description="Impairs interaction with histone H3 peptides trimethylated at 'Lys-10' (H3K9me3) and reduces localization to pericentromeric heterochromatin foci.">
    <original>D</original>
    <variation>A</variation>
    <location>
        <position position="207"/>
    </location>
</feature>
<feature type="mutagenesis site" description="Impairs interaction with histone H3 peptides trimethylated at 'Lys-10' (H3K9me3)." evidence="29">
    <original>I</original>
    <variation>A</variation>
    <location>
        <position position="209"/>
    </location>
</feature>
<feature type="mutagenesis site" description="Impairs interaction with histone H3 peptides trimethylated at 'Lys-10' (H3K9me3)." evidence="29">
    <original>D</original>
    <variation>A</variation>
    <location>
        <position position="214"/>
    </location>
</feature>
<feature type="mutagenesis site" description="Impairs interaction with histone H3 peptides trimethylated at 'Lys-10' (H3K9me3); loss of heterochromatic localization." evidence="29 31">
    <original>D</original>
    <variation>A</variation>
    <location>
        <position position="217"/>
    </location>
</feature>
<feature type="mutagenesis site" description="Impairs interaction with histone H3 peptides unmethylated at 'Lys-5' (H3K4me0); reduces pericentromeric localization." evidence="30">
    <original>E</original>
    <variation>A</variation>
    <location>
        <position position="218"/>
    </location>
</feature>
<feature type="mutagenesis site" description="Impairs interaction with histone H3 peptides and reduces localization to pericentromeric heterochromatin foci." evidence="31">
    <original>E</original>
    <variation>L</variation>
    <location>
        <position position="252"/>
    </location>
</feature>
<feature type="mutagenesis site" description="Abolishes ATPAse activity, no effect on pericentromeric heterochromatin localization." evidence="19 31">
    <original>K</original>
    <variation>R</variation>
    <location>
        <position position="1600"/>
    </location>
</feature>
<feature type="sequence conflict" description="In Ref. 7; AAC50069." evidence="47" ref="7">
    <original>A</original>
    <variation>R</variation>
    <location>
        <position position="879"/>
    </location>
</feature>
<feature type="sequence conflict" description="In Ref. 4; BAD92165." evidence="47" ref="4">
    <original>S</original>
    <variation>P</variation>
    <location>
        <position position="1286"/>
    </location>
</feature>
<feature type="sequence conflict" description="In Ref. 7; AAC50069." evidence="47" ref="7">
    <original>P</original>
    <variation>L</variation>
    <location>
        <position position="1627"/>
    </location>
</feature>
<feature type="sequence conflict" description="In Ref. 7; AAC50069." evidence="47" ref="7">
    <original>L</original>
    <variation>F</variation>
    <location>
        <position position="1632"/>
    </location>
</feature>
<feature type="sequence conflict" description="In Ref. 7; AAC50069." evidence="47" ref="7">
    <original>A</original>
    <variation>G</variation>
    <location>
        <position position="2280"/>
    </location>
</feature>
<feature type="sequence conflict" description="In Ref. 7; AAC50069." evidence="47" ref="7">
    <original>KG</original>
    <variation>RV</variation>
    <location>
        <begin position="2283"/>
        <end position="2284"/>
    </location>
</feature>
<feature type="sequence conflict" description="In Ref. 7; AAC50069." evidence="47" ref="7">
    <original>L</original>
    <variation>H</variation>
    <location>
        <position position="2436"/>
    </location>
</feature>
<feature type="sequence conflict" description="In Ref. 7; AAC50069." evidence="47" ref="7">
    <original>P</original>
    <variation>R</variation>
    <location>
        <position position="2442"/>
    </location>
</feature>
<feature type="turn" evidence="62">
    <location>
        <begin position="172"/>
        <end position="174"/>
    </location>
</feature>
<feature type="strand" evidence="61">
    <location>
        <begin position="176"/>
        <end position="178"/>
    </location>
</feature>
<feature type="turn" evidence="61">
    <location>
        <begin position="179"/>
        <end position="181"/>
    </location>
</feature>
<feature type="turn" evidence="62">
    <location>
        <begin position="183"/>
        <end position="185"/>
    </location>
</feature>
<feature type="strand" evidence="62">
    <location>
        <begin position="186"/>
        <end position="188"/>
    </location>
</feature>
<feature type="turn" evidence="62">
    <location>
        <begin position="190"/>
        <end position="192"/>
    </location>
</feature>
<feature type="strand" evidence="62">
    <location>
        <begin position="195"/>
        <end position="197"/>
    </location>
</feature>
<feature type="helix" evidence="62">
    <location>
        <begin position="198"/>
        <end position="206"/>
    </location>
</feature>
<feature type="strand" evidence="60">
    <location>
        <begin position="210"/>
        <end position="212"/>
    </location>
</feature>
<feature type="turn" evidence="60">
    <location>
        <begin position="213"/>
        <end position="215"/>
    </location>
</feature>
<feature type="strand" evidence="62">
    <location>
        <begin position="217"/>
        <end position="219"/>
    </location>
</feature>
<feature type="turn" evidence="62">
    <location>
        <begin position="221"/>
        <end position="223"/>
    </location>
</feature>
<feature type="strand" evidence="62">
    <location>
        <begin position="227"/>
        <end position="231"/>
    </location>
</feature>
<feature type="strand" evidence="62">
    <location>
        <begin position="233"/>
        <end position="236"/>
    </location>
</feature>
<feature type="strand" evidence="62">
    <location>
        <begin position="238"/>
        <end position="240"/>
    </location>
</feature>
<feature type="helix" evidence="62">
    <location>
        <begin position="241"/>
        <end position="247"/>
    </location>
</feature>
<feature type="helix" evidence="62">
    <location>
        <begin position="250"/>
        <end position="256"/>
    </location>
</feature>
<feature type="strand" evidence="60">
    <location>
        <begin position="258"/>
        <end position="261"/>
    </location>
</feature>
<feature type="turn" evidence="62">
    <location>
        <begin position="266"/>
        <end position="268"/>
    </location>
</feature>
<feature type="helix" evidence="62">
    <location>
        <begin position="271"/>
        <end position="273"/>
    </location>
</feature>
<feature type="helix" evidence="62">
    <location>
        <begin position="274"/>
        <end position="284"/>
    </location>
</feature>
<feature type="helix" evidence="63">
    <location>
        <begin position="1267"/>
        <end position="1282"/>
    </location>
</feature>
<proteinExistence type="evidence at protein level"/>
<sequence>MTAEPMSESKLNTLVQKLHDFLAHSSEESEETSSPPRLAMNQNTDKISGSGSNSDMMENSKEEGTSSSEKSKSSGSSRSKRKPSIVTKYVESDDEKPLDDETVNEDASNENSENDITMQSLPKGTVIVQPEPVLNEDKDDFKGPEFRSRSKMKTENLKKRGEDGLHGIVSCTACGQQVNHFQKDSIYRHPSLQVLICKNCFKYYMSDDISRDSDGMDEQCRWCAEGGNLICCDFCHNAFCKKCILRNLGRKELSTIMDENNQWYCYICHPEPLLDLVTACNSVFENLEQLLQQNKKKIKVDSEKSNKVYEHTSRFSPKKTSSNCNGEEKKLDDSCSGSVTYSYSALIVPKEMIKKAKKLIETTANMNSSYVKFLKQATDNSEISSATKLRQLKAFKSVLADIKKAHLALEEDLNSEFRAMDAVNKEKNTKEHKVIDAKFETKARKGEKPCALEKKDISKSEAKLSRKQVDSEHMHQNVPTEEQRTNKSTGGEHKKSDRKEEPQYEPANTSEDLDMDIVSVPSSVPEDIFENLETAMEVQSSVDHQGDGSSGTEQEVESSSVKLNISSKDNRGGIKSKTTAKVTKELYVKLTPVSLSNSPIKGADCQEVPQDKDGYKSCGLNPKLEKCGLGQENSDNEHLVENEVSLLLEESDLRRSPRVKTTPLRRPTETNPVTSNSDEECNETVKEKQKLSVPVRKKDKRNSSDSAIDNPKPNKLPKSKQSETVDQNSDSDEMLAILKEVSRMSHSSSSDTDINEIHTNHKTLYDLKTQAGKDDKGKRKRKSSTSGSDFDTKKGKSAKSSIISKKKRQTQSESSNYDSELEKEIKSMSKIGAARTTKKRIPNTKDFDSSEDEKHSKKGMDNQGHKNLKTSQEGSSDDAERKQERETFSSAEGTVDKDTTIMELRDRLPKKQQASASTDGVDKLSGKEESFTSLEVRKVAETKEKSKHLKTKTCKKVQDGLSDIAEKFLKKDQSDETSEDDKKQSKKGTEEKKKPSDFKKKVIKMEQQYESSSDGTEKLPEREEICHFPKGIKQIKNGTTDGEKKSKKIRDKTSKKKDELSDYAEKSTGKGDSCDSSEDKKSKNGAYGREKKRCKLLGKSSRKRQDCSSSDTEKYSMKEDGCNSSDKRLKRIELRERRNLSSKRNTKEIQSGSSSSDAEESSEDNKKKKQRTSSKKKAVIVKEKKRNSLRTSTKRKQADITSSSSSDIEDDDQNSIGEGSSDEQKIKPVTENLVLSSHTGFCQSSGDEALSKSVPVTVDDDDDDNDPENRIAKKMLLEEIKANLSSDEDGSSDDEPEEGKKRTGKQNEENPGDEEAKNQVNSESDSDSEESKKPRYRHRLLRHKLTVSDGESGEEKKTKPKEHKEVKGRNRRKVSSEDSEDSDFQESGVSEEVSESEDEQRPRTRSAKKAELEENQRSYKQKKKRRRIKVQEDSSSENKSNSEEEEEEKEEEEEEEEEEEEEEEDENDDSKSPGKGRKKIRKILKDDKLRTETQNALKEEEERRKRIAEREREREKLREVIEIEDASPTKCPITTKLVLDEDEETKEPLVQVHRNMVIKLKPHQVDGVQFMWDCCCESVKKTKKSPGSGCILAHCMGLGKTLQVVSFLHTVLLCDKLDFSTALVVCPLNTALNWMNEFEKWQEGLKDDEKLEVSELATVKRPQERSYMLQRWQEDGGVMIIGYEMYRNLAQGRNVKSRKLKEIFNKALVDPGPDFVVCDEGHILKNEASAVSKAMNSIRSRRRIILTGTPLQNNLIEYHCMVNFIKENLLGSIKEFRNRFINPIQNGQCADSTMVDVRVMKKRAHILYEMLAGCVQRKDYTALTKFLPPKHEYVLAVRMTSIQCKLYQYYLDHLTGVGNNSEGGRGKAGAKLFQDFQMLSRIWTHPWCLQLDYISKENKGYFDEDSMDEFIASDSDETSMSLSSDDYTKKKKKGKKGKKDSSSSGSGSDNDVEVIKVWNSRSRGGGEGNVDETGNNPSVSLKLEESKATSSSNPSSPAPDWYKDFVTDADAEVLEHSGKMVLLFEILRMAEEIGDKVLVFSQSLISLDLIEDFLELASREKTEDKDKPLIYKGEGKWLRNIDYYRLDGSTTAQSRKKWAEEFNDETNVRGRLFIISTKAGSLGINLVAANRVIIFDASWNPSYDIQSIFRVYRFGQTKPVYVYRFLAQGTMEDKIYDRQVTKQSLSFRVVDQQQVERHFTMNELTELYTFEPDLLDDPNSEKKKKRDTPMLPKDTILAELLQIHKEHIVGYHEHDSLLDHKEEEELTEEERKAAWAEYEAEKKGLTMRFNIPTGTNLPPVSFNSQTPYIPFNLGALSAMSNQQLEDLINQGREKVVEATNSVTAVRIQPLEDIISAVWKENMNLSEAQVQALALSRQASQELDVKRREAIYNDVLTKQQMLISCVQRILMNRRLQQQYNQQQQQQMTYQQATLGHLMMPKPPNLIMNPSNYQQIDMRGMYQPVAGGMQPPPLQRAPPPMRSKNPGPSQGKSM</sequence>
<name>ATRX_HUMAN</name>
<evidence type="ECO:0000250" key="1"/>
<evidence type="ECO:0000250" key="2">
    <source>
        <dbReference type="UniProtKB" id="P70486"/>
    </source>
</evidence>
<evidence type="ECO:0000250" key="3">
    <source>
        <dbReference type="UniProtKB" id="Q61687"/>
    </source>
</evidence>
<evidence type="ECO:0000255" key="4">
    <source>
        <dbReference type="PROSITE-ProRule" id="PRU00541"/>
    </source>
</evidence>
<evidence type="ECO:0000255" key="5">
    <source>
        <dbReference type="PROSITE-ProRule" id="PRU00542"/>
    </source>
</evidence>
<evidence type="ECO:0000255" key="6">
    <source>
        <dbReference type="PROSITE-ProRule" id="PRU00865"/>
    </source>
</evidence>
<evidence type="ECO:0000256" key="7">
    <source>
        <dbReference type="SAM" id="MobiDB-lite"/>
    </source>
</evidence>
<evidence type="ECO:0000269" key="8">
    <source>
    </source>
</evidence>
<evidence type="ECO:0000269" key="9">
    <source>
    </source>
</evidence>
<evidence type="ECO:0000269" key="10">
    <source>
    </source>
</evidence>
<evidence type="ECO:0000269" key="11">
    <source>
    </source>
</evidence>
<evidence type="ECO:0000269" key="12">
    <source>
    </source>
</evidence>
<evidence type="ECO:0000269" key="13">
    <source>
    </source>
</evidence>
<evidence type="ECO:0000269" key="14">
    <source>
    </source>
</evidence>
<evidence type="ECO:0000269" key="15">
    <source>
    </source>
</evidence>
<evidence type="ECO:0000269" key="16">
    <source>
    </source>
</evidence>
<evidence type="ECO:0000269" key="17">
    <source>
    </source>
</evidence>
<evidence type="ECO:0000269" key="18">
    <source>
    </source>
</evidence>
<evidence type="ECO:0000269" key="19">
    <source>
    </source>
</evidence>
<evidence type="ECO:0000269" key="20">
    <source>
    </source>
</evidence>
<evidence type="ECO:0000269" key="21">
    <source>
    </source>
</evidence>
<evidence type="ECO:0000269" key="22">
    <source>
    </source>
</evidence>
<evidence type="ECO:0000269" key="23">
    <source>
    </source>
</evidence>
<evidence type="ECO:0000269" key="24">
    <source>
    </source>
</evidence>
<evidence type="ECO:0000269" key="25">
    <source>
    </source>
</evidence>
<evidence type="ECO:0000269" key="26">
    <source>
    </source>
</evidence>
<evidence type="ECO:0000269" key="27">
    <source>
    </source>
</evidence>
<evidence type="ECO:0000269" key="28">
    <source>
    </source>
</evidence>
<evidence type="ECO:0000269" key="29">
    <source>
    </source>
</evidence>
<evidence type="ECO:0000269" key="30">
    <source>
    </source>
</evidence>
<evidence type="ECO:0000269" key="31">
    <source>
    </source>
</evidence>
<evidence type="ECO:0000269" key="32">
    <source>
    </source>
</evidence>
<evidence type="ECO:0000269" key="33">
    <source>
    </source>
</evidence>
<evidence type="ECO:0000269" key="34">
    <source>
    </source>
</evidence>
<evidence type="ECO:0000269" key="35">
    <source>
    </source>
</evidence>
<evidence type="ECO:0000269" key="36">
    <source>
    </source>
</evidence>
<evidence type="ECO:0000269" key="37">
    <source>
    </source>
</evidence>
<evidence type="ECO:0000269" key="38">
    <source>
    </source>
</evidence>
<evidence type="ECO:0000269" key="39">
    <source>
    </source>
</evidence>
<evidence type="ECO:0000269" key="40">
    <source>
    </source>
</evidence>
<evidence type="ECO:0000269" key="41">
    <source>
    </source>
</evidence>
<evidence type="ECO:0000269" key="42">
    <source>
    </source>
</evidence>
<evidence type="ECO:0000269" key="43">
    <source>
    </source>
</evidence>
<evidence type="ECO:0000303" key="44">
    <source>
    </source>
</evidence>
<evidence type="ECO:0000303" key="45">
    <source>
    </source>
</evidence>
<evidence type="ECO:0000303" key="46">
    <source ref="4"/>
</evidence>
<evidence type="ECO:0000305" key="47"/>
<evidence type="ECO:0007744" key="48">
    <source>
    </source>
</evidence>
<evidence type="ECO:0007744" key="49">
    <source>
    </source>
</evidence>
<evidence type="ECO:0007744" key="50">
    <source>
    </source>
</evidence>
<evidence type="ECO:0007744" key="51">
    <source>
    </source>
</evidence>
<evidence type="ECO:0007744" key="52">
    <source>
    </source>
</evidence>
<evidence type="ECO:0007744" key="53">
    <source>
    </source>
</evidence>
<evidence type="ECO:0007744" key="54">
    <source>
    </source>
</evidence>
<evidence type="ECO:0007744" key="55">
    <source>
    </source>
</evidence>
<evidence type="ECO:0007744" key="56">
    <source>
    </source>
</evidence>
<evidence type="ECO:0007744" key="57">
    <source>
    </source>
</evidence>
<evidence type="ECO:0007744" key="58">
    <source>
    </source>
</evidence>
<evidence type="ECO:0007744" key="59">
    <source>
    </source>
</evidence>
<evidence type="ECO:0007829" key="60">
    <source>
        <dbReference type="PDB" id="2JM1"/>
    </source>
</evidence>
<evidence type="ECO:0007829" key="61">
    <source>
        <dbReference type="PDB" id="2LBM"/>
    </source>
</evidence>
<evidence type="ECO:0007829" key="62">
    <source>
        <dbReference type="PDB" id="3QL9"/>
    </source>
</evidence>
<evidence type="ECO:0007829" key="63">
    <source>
        <dbReference type="PDB" id="5GRQ"/>
    </source>
</evidence>
<organism>
    <name type="scientific">Homo sapiens</name>
    <name type="common">Human</name>
    <dbReference type="NCBI Taxonomy" id="9606"/>
    <lineage>
        <taxon>Eukaryota</taxon>
        <taxon>Metazoa</taxon>
        <taxon>Chordata</taxon>
        <taxon>Craniata</taxon>
        <taxon>Vertebrata</taxon>
        <taxon>Euteleostomi</taxon>
        <taxon>Mammalia</taxon>
        <taxon>Eutheria</taxon>
        <taxon>Euarchontoglires</taxon>
        <taxon>Primates</taxon>
        <taxon>Haplorrhini</taxon>
        <taxon>Catarrhini</taxon>
        <taxon>Hominidae</taxon>
        <taxon>Homo</taxon>
    </lineage>
</organism>
<gene>
    <name type="primary">ATRX</name>
    <name type="synonym">RAD54L</name>
    <name type="synonym">XH2</name>
</gene>